<comment type="function">
    <text evidence="11 13 14 15 16 18 19 20 21 22 23 25 27 30 35 36 38 41 42">Polycomb group (PcG) protein. Catalytic subunit of the PRC2/EED-EZH2 complex, which methylates 'Lys-9' (H3K9me) and 'Lys-27' (H3K27me) of histone H3, leading to transcriptional repression of the affected target gene. Able to mono-, di- and trimethylate 'Lys-27' of histone H3 to form H3K27me1, H3K27me2 and H3K27me3, respectively. Displays a preference for substrates with less methylation, loses activity when progressively more methyl groups are incorporated into H3K27, H3K27me0 &gt; H3K27me1 &gt; H3K27me2 (PubMed:22323599, PubMed:30923826). Compared to EZH1-containing complexes, it is more abundant in embryonic stem cells and plays a major role in forming H3K27me3, which is required for embryonic stem cell identity and proper differentiation. The PRC2/EED-EZH2 complex may also serve as a recruiting platform for DNA methyltransferases, thereby linking two epigenetic repression systems. Genes repressed by the PRC2/EED-EZH2 complex include HOXC8, HOXA9, MYT1, CDKN2A and retinoic acid target genes. EZH2 can also methylate non-histone proteins such as the transcription factor GATA4 and the nuclear receptor RORA. Regulates the circadian clock via histone methylation at the promoter of the circadian genes. Essential for the CRY1/2-mediated repression of the transcriptional activation of PER1/2 by the CLOCK-BMAL1 heterodimer; involved in the di and trimethylation of 'Lys-27' of histone H3 on PER1/2 promoters which is necessary for the CRY1/2 proteins to inhibit transcription.</text>
</comment>
<comment type="catalytic activity">
    <reaction evidence="35">
        <text>L-lysyl(27)-[histone H3] + 3 S-adenosyl-L-methionine = N(6),N(6),N(6)-trimethyl-L-lysyl(27)-[histone H3] + 3 S-adenosyl-L-homocysteine + 3 H(+)</text>
        <dbReference type="Rhea" id="RHEA:60292"/>
        <dbReference type="Rhea" id="RHEA-COMP:15535"/>
        <dbReference type="Rhea" id="RHEA-COMP:15548"/>
        <dbReference type="ChEBI" id="CHEBI:15378"/>
        <dbReference type="ChEBI" id="CHEBI:29969"/>
        <dbReference type="ChEBI" id="CHEBI:57856"/>
        <dbReference type="ChEBI" id="CHEBI:59789"/>
        <dbReference type="ChEBI" id="CHEBI:61961"/>
        <dbReference type="EC" id="2.1.1.356"/>
    </reaction>
</comment>
<comment type="subunit">
    <text evidence="2 6 7 9 10 15 16 17 18 24 25 27 32 41 42 43 44 45 46 47 48 49 53">Component of the PRC2/EED-EZH2 complex, which includes EED, EZH2, SUZ12, RBBP4 and RBBP7 and possibly AEBP2. The minimum components required for methyltransferase activity of the PRC2/EED-EZH2 complex are EED, EZH2 and SUZ12. The PRC2 complex may also interact with DNMT1, DNMT3A, DNMT3B and PHF1 via the EZH2 subunit and with SIRT1 via the SUZ12 subunit. Interacts with HDAC1 and HDAC2. Binds ATRX via the SET domain (Probable). Interacts with PRAME. Interacts with CDYL. Interacts with CLOCK, BMAL1 and CRY1 (By similarity). Interacts with DNMT3L; the interaction is direct (By similarity). Interacts with EZHIP; the interaction blocks EZH2 methyltransferase activity (PubMed:30923826, PubMed:31086175, PubMed:31451685). Interacts with ZNF263; recruited to the SIX3 promoter along with other proteins involved in chromatin modification and transcriptional corepression where it contributes to transcriptional repression (PubMed:32051553). Interacts with ARMC12 (PubMed:30026490). Interacts with ZMYND8; the interaction is dependent on the presence of chromatin (PubMed:33323928, PubMed:36064715). Interacts with DDX18; this interaction inhibits the PRC2 complex (By similarity).</text>
</comment>
<comment type="interaction">
    <interactant intactId="EBI-530054">
        <id>Q15910</id>
    </interactant>
    <interactant intactId="EBI-1646500">
        <id>Q8IXJ9</id>
        <label>ASXL1</label>
    </interactant>
    <organismsDiffer>false</organismsDiffer>
    <experiments>6</experiments>
</comment>
<comment type="interaction">
    <interactant intactId="EBI-530054">
        <id>Q15910</id>
    </interactant>
    <interactant intactId="EBI-396461">
        <id>P46100</id>
        <label>ATRX</label>
    </interactant>
    <organismsDiffer>false</organismsDiffer>
    <experiments>2</experiments>
</comment>
<comment type="interaction">
    <interactant intactId="EBI-530054">
        <id>Q15910</id>
    </interactant>
    <interactant intactId="EBI-741977">
        <id>Q96MT8</id>
        <label>CEP63</label>
    </interactant>
    <organismsDiffer>false</organismsDiffer>
    <experiments>4</experiments>
</comment>
<comment type="interaction">
    <interactant intactId="EBI-530054">
        <id>Q15910</id>
    </interactant>
    <interactant intactId="EBI-719459">
        <id>P26358</id>
        <label>DNMT1</label>
    </interactant>
    <organismsDiffer>false</organismsDiffer>
    <experiments>8</experiments>
</comment>
<comment type="interaction">
    <interactant intactId="EBI-530054">
        <id>Q15910</id>
    </interactant>
    <interactant intactId="EBI-923653">
        <id>Q9Y6K1</id>
        <label>DNMT3A</label>
    </interactant>
    <organismsDiffer>false</organismsDiffer>
    <experiments>6</experiments>
</comment>
<comment type="interaction">
    <interactant intactId="EBI-530054">
        <id>Q15910</id>
    </interactant>
    <interactant intactId="EBI-80125">
        <id>Q9UBC3</id>
        <label>DNMT3B</label>
    </interactant>
    <organismsDiffer>false</organismsDiffer>
    <experiments>14</experiments>
</comment>
<comment type="interaction">
    <interactant intactId="EBI-530054">
        <id>Q15910</id>
    </interactant>
    <interactant intactId="EBI-923794">
        <id>O75530</id>
        <label>EED</label>
    </interactant>
    <organismsDiffer>false</organismsDiffer>
    <experiments>17</experiments>
</comment>
<comment type="interaction">
    <interactant intactId="EBI-530054">
        <id>Q15910</id>
    </interactant>
    <interactant intactId="EBI-983719">
        <id>Q9BZS1</id>
        <label>FOXP3</label>
    </interactant>
    <organismsDiffer>false</organismsDiffer>
    <experiments>9</experiments>
</comment>
<comment type="interaction">
    <interactant intactId="EBI-530054">
        <id>Q15910</id>
    </interactant>
    <interactant intactId="EBI-15825247">
        <id>Q92833-1</id>
        <label>JARID2</label>
    </interactant>
    <organismsDiffer>false</organismsDiffer>
    <experiments>7</experiments>
</comment>
<comment type="interaction">
    <interactant intactId="EBI-530054">
        <id>Q15910</id>
    </interactant>
    <interactant intactId="EBI-530034">
        <id>O43189</id>
        <label>PHF1</label>
    </interactant>
    <organismsDiffer>false</organismsDiffer>
    <experiments>9</experiments>
</comment>
<comment type="interaction">
    <interactant intactId="EBI-530054">
        <id>Q15910</id>
    </interactant>
    <interactant intactId="EBI-867256">
        <id>Q15156</id>
        <label>PML-RAR</label>
    </interactant>
    <organismsDiffer>false</organismsDiffer>
    <experiments>8</experiments>
</comment>
<comment type="interaction">
    <interactant intactId="EBI-530054">
        <id>Q15910</id>
    </interactant>
    <interactant intactId="EBI-413374">
        <id>P10276</id>
        <label>RARA</label>
    </interactant>
    <organismsDiffer>false</organismsDiffer>
    <experiments>2</experiments>
</comment>
<comment type="interaction">
    <interactant intactId="EBI-530054">
        <id>Q15910</id>
    </interactant>
    <interactant intactId="EBI-518675">
        <id>P40763</id>
        <label>STAT3</label>
    </interactant>
    <organismsDiffer>false</organismsDiffer>
    <experiments>5</experiments>
</comment>
<comment type="interaction">
    <interactant intactId="EBI-530054">
        <id>Q15910</id>
    </interactant>
    <interactant intactId="EBI-349968">
        <id>O43463</id>
        <label>SUV39H1</label>
    </interactant>
    <organismsDiffer>false</organismsDiffer>
    <experiments>2</experiments>
</comment>
<comment type="interaction">
    <interactant intactId="EBI-530054">
        <id>Q15910</id>
    </interactant>
    <interactant intactId="EBI-1264675">
        <id>Q15022</id>
        <label>SUZ12</label>
    </interactant>
    <organismsDiffer>false</organismsDiffer>
    <experiments>31</experiments>
</comment>
<comment type="interaction">
    <interactant intactId="EBI-530054">
        <id>Q15910</id>
    </interactant>
    <interactant intactId="EBI-3043871">
        <id>Q9CWR8</id>
        <label>Dnmt3l</label>
    </interactant>
    <organismsDiffer>true</organismsDiffer>
    <experiments>2</experiments>
</comment>
<comment type="interaction">
    <interactant intactId="EBI-10699473">
        <id>Q15910-2</id>
    </interactant>
    <interactant intactId="EBI-491169">
        <id>P07550</id>
        <label>ADRB2</label>
    </interactant>
    <organismsDiffer>false</organismsDiffer>
    <experiments>3</experiments>
</comment>
<comment type="interaction">
    <interactant intactId="EBI-10699473">
        <id>Q15910-2</id>
    </interactant>
    <interactant intactId="EBI-25837549">
        <id>P28329-3</id>
        <label>CHAT</label>
    </interactant>
    <organismsDiffer>false</organismsDiffer>
    <experiments>3</experiments>
</comment>
<comment type="interaction">
    <interactant intactId="EBI-10699473">
        <id>Q15910-2</id>
    </interactant>
    <interactant intactId="EBI-11132357">
        <id>O75530-2</id>
        <label>EED</label>
    </interactant>
    <organismsDiffer>false</organismsDiffer>
    <experiments>3</experiments>
</comment>
<comment type="interaction">
    <interactant intactId="EBI-10699473">
        <id>Q15910-2</id>
    </interactant>
    <interactant intactId="EBI-348399">
        <id>P22607</id>
        <label>FGFR3</label>
    </interactant>
    <organismsDiffer>false</organismsDiffer>
    <experiments>3</experiments>
</comment>
<comment type="interaction">
    <interactant intactId="EBI-10699473">
        <id>Q15910-2</id>
    </interactant>
    <interactant intactId="EBI-10172052">
        <id>P60411</id>
        <label>KRTAP10-9</label>
    </interactant>
    <organismsDiffer>false</organismsDiffer>
    <experiments>3</experiments>
</comment>
<comment type="interaction">
    <interactant intactId="EBI-10699473">
        <id>Q15910-2</id>
    </interactant>
    <interactant intactId="EBI-5235340">
        <id>Q7Z699</id>
        <label>SPRED1</label>
    </interactant>
    <organismsDiffer>false</organismsDiffer>
    <experiments>3</experiments>
</comment>
<comment type="subcellular location">
    <subcellularLocation>
        <location evidence="8 11 14 49">Nucleus</location>
    </subcellularLocation>
    <text evidence="2">Localizes to the inactive X chromosome in trophoblast stem cells.</text>
</comment>
<comment type="alternative products">
    <event type="alternative splicing"/>
    <isoform>
        <id>Q15910-1</id>
        <name>1</name>
        <sequence type="displayed"/>
    </isoform>
    <isoform>
        <id>Q15910-2</id>
        <name>2</name>
        <sequence type="described" ref="VSP_038815"/>
    </isoform>
    <isoform>
        <id>Q15910-3</id>
        <name>3</name>
        <sequence type="described" ref="VSP_038814"/>
    </isoform>
    <isoform>
        <id>Q15910-4</id>
        <name>4</name>
        <sequence type="described" ref="VSP_038813"/>
    </isoform>
    <isoform>
        <id>Q15910-5</id>
        <name>5</name>
        <sequence type="described" ref="VSP_038813 VSP_038816"/>
    </isoform>
</comment>
<comment type="tissue specificity">
    <text evidence="11 44">In the ovary, expressed in primordial follicles and oocytes and also in external follicle cells (at protein level) (PubMed:31451685). Expressed in many tissues (PubMed:14532106). Overexpressed in numerous tumor types including carcinomas of the breast, colon, larynx, lymphoma and testis (PubMed:14532106).</text>
</comment>
<comment type="developmental stage">
    <text evidence="11 12 23">Expression decreases during senescence of embryonic fibroblasts (HEFs). Expression peaks at the G1/S phase boundary.</text>
</comment>
<comment type="induction">
    <text evidence="11 12 23">Expression is induced by E2F1, E2F2 and E2F3. Expression is reduced in cells subject to numerous types of stress including UV-, IR- and bleomycin-induced DNA damage and by activation of p53/TP53.</text>
</comment>
<comment type="PTM">
    <text evidence="17 30">Phosphorylated by AKT1. Phosphorylation by AKT1 reduces methyltransferase activity. Phosphorylation at Thr-345 by CDK1 and CDK2 promotes maintenance of H3K27me3 levels at EZH2-target loci, thus leading to epigenetic gene silencing.</text>
</comment>
<comment type="PTM">
    <text evidence="26">Sumoylated.</text>
</comment>
<comment type="PTM">
    <text evidence="38">Glycosylated: O-GlcNAcylation at Ser-75 by OGT increases stability of EZH2 and facilitates the formation of H3K27me3 by the PRC2/EED-EZH2 complex.</text>
</comment>
<comment type="disease" evidence="33 34 37 39 40">
    <disease id="DI-01141">
        <name>Weaver syndrome</name>
        <acronym>WVS</acronym>
        <description>A syndrome of accelerated growth and osseous maturation, unusual craniofacial appearance, hoarse and low-pitched cry, and hypertonia with camptodactyly. Distinguishing features of Weaver syndrome include broad forehead and face, ocular hypertelorism, prominent wide philtrum, micrognathia, deep horizontal chin groove, and deep-set nails. In addition, carpal bone development is advanced over the rest of the hand.</description>
        <dbReference type="MIM" id="277590"/>
    </disease>
    <text>The disease is caused by variants affecting the gene represented in this entry.</text>
</comment>
<comment type="similarity">
    <text evidence="3">Belongs to the class V-like SAM-binding methyltransferase superfamily. Histone-lysine methyltransferase family. EZ subfamily.</text>
</comment>
<comment type="caution">
    <text evidence="54 55 56">Two variants of the PRC2 complex have been described, termed PRC3 and PRC4. Each of the three complexes may include a different complement of EED isoforms, although the precise sequences of the isoforms in each complex have not been determined. The PRC2 and PRC4 complexes may also methylate 'Lys-26' of histone H1 in addition to 'Lys-27' of histone H3 (PubMed:15099518, PubMed:15684044). In contrast, other studies have demonstrated no methylation of 'Lys-26' of histone H1 by PRC2 (PubMed:16431907).</text>
</comment>
<comment type="sequence caution" evidence="53">
    <conflict type="erroneous gene model prediction">
        <sequence resource="EMBL-CDS" id="AAS07448"/>
    </conflict>
</comment>
<proteinExistence type="evidence at protein level"/>
<keyword id="KW-0002">3D-structure</keyword>
<keyword id="KW-0025">Alternative splicing</keyword>
<keyword id="KW-0090">Biological rhythms</keyword>
<keyword id="KW-0156">Chromatin regulator</keyword>
<keyword id="KW-0225">Disease variant</keyword>
<keyword id="KW-0325">Glycoprotein</keyword>
<keyword id="KW-1017">Isopeptide bond</keyword>
<keyword id="KW-0489">Methyltransferase</keyword>
<keyword id="KW-0539">Nucleus</keyword>
<keyword id="KW-0597">Phosphoprotein</keyword>
<keyword id="KW-1267">Proteomics identification</keyword>
<keyword id="KW-1185">Reference proteome</keyword>
<keyword id="KW-0678">Repressor</keyword>
<keyword id="KW-0949">S-adenosyl-L-methionine</keyword>
<keyword id="KW-0804">Transcription</keyword>
<keyword id="KW-0805">Transcription regulation</keyword>
<keyword id="KW-0808">Transferase</keyword>
<keyword id="KW-0832">Ubl conjugation</keyword>
<reference key="1">
    <citation type="journal article" date="1996" name="Genomics">
        <title>Cloning of a human homolog of the Drosophila enhancer of zeste gene (EZH2) that maps to chromosome 21q22.2.</title>
        <authorList>
            <person name="Chen H."/>
            <person name="Rossier C."/>
            <person name="Antonarakis S.E."/>
        </authorList>
    </citation>
    <scope>NUCLEOTIDE SEQUENCE [MRNA] (ISOFORM 1)</scope>
    <source>
        <tissue>Brain</tissue>
    </source>
</reference>
<reference key="2">
    <citation type="journal article" date="1997" name="EMBO J.">
        <title>Mammalian homologues of the Polycomb-group gene Enhancer of zeste mediate gene silencing in Drosophila heterochromatin and at S. cerevisiae telomeres.</title>
        <authorList>
            <person name="Laible G."/>
            <person name="Wolf A."/>
            <person name="Dorn R."/>
            <person name="Reuter G."/>
            <person name="Nislow C."/>
            <person name="Lebersorger A."/>
            <person name="Popkin D."/>
            <person name="Pillus L."/>
            <person name="Jenuwein T."/>
        </authorList>
    </citation>
    <scope>NUCLEOTIDE SEQUENCE [MRNA] (ISOFORM 1)</scope>
</reference>
<reference key="3">
    <citation type="journal article" date="2004" name="Nat. Genet.">
        <title>Complete sequencing and characterization of 21,243 full-length human cDNAs.</title>
        <authorList>
            <person name="Ota T."/>
            <person name="Suzuki Y."/>
            <person name="Nishikawa T."/>
            <person name="Otsuki T."/>
            <person name="Sugiyama T."/>
            <person name="Irie R."/>
            <person name="Wakamatsu A."/>
            <person name="Hayashi K."/>
            <person name="Sato H."/>
            <person name="Nagai K."/>
            <person name="Kimura K."/>
            <person name="Makita H."/>
            <person name="Sekine M."/>
            <person name="Obayashi M."/>
            <person name="Nishi T."/>
            <person name="Shibahara T."/>
            <person name="Tanaka T."/>
            <person name="Ishii S."/>
            <person name="Yamamoto J."/>
            <person name="Saito K."/>
            <person name="Kawai Y."/>
            <person name="Isono Y."/>
            <person name="Nakamura Y."/>
            <person name="Nagahari K."/>
            <person name="Murakami K."/>
            <person name="Yasuda T."/>
            <person name="Iwayanagi T."/>
            <person name="Wagatsuma M."/>
            <person name="Shiratori A."/>
            <person name="Sudo H."/>
            <person name="Hosoiri T."/>
            <person name="Kaku Y."/>
            <person name="Kodaira H."/>
            <person name="Kondo H."/>
            <person name="Sugawara M."/>
            <person name="Takahashi M."/>
            <person name="Kanda K."/>
            <person name="Yokoi T."/>
            <person name="Furuya T."/>
            <person name="Kikkawa E."/>
            <person name="Omura Y."/>
            <person name="Abe K."/>
            <person name="Kamihara K."/>
            <person name="Katsuta N."/>
            <person name="Sato K."/>
            <person name="Tanikawa M."/>
            <person name="Yamazaki M."/>
            <person name="Ninomiya K."/>
            <person name="Ishibashi T."/>
            <person name="Yamashita H."/>
            <person name="Murakawa K."/>
            <person name="Fujimori K."/>
            <person name="Tanai H."/>
            <person name="Kimata M."/>
            <person name="Watanabe M."/>
            <person name="Hiraoka S."/>
            <person name="Chiba Y."/>
            <person name="Ishida S."/>
            <person name="Ono Y."/>
            <person name="Takiguchi S."/>
            <person name="Watanabe S."/>
            <person name="Yosida M."/>
            <person name="Hotuta T."/>
            <person name="Kusano J."/>
            <person name="Kanehori K."/>
            <person name="Takahashi-Fujii A."/>
            <person name="Hara H."/>
            <person name="Tanase T.-O."/>
            <person name="Nomura Y."/>
            <person name="Togiya S."/>
            <person name="Komai F."/>
            <person name="Hara R."/>
            <person name="Takeuchi K."/>
            <person name="Arita M."/>
            <person name="Imose N."/>
            <person name="Musashino K."/>
            <person name="Yuuki H."/>
            <person name="Oshima A."/>
            <person name="Sasaki N."/>
            <person name="Aotsuka S."/>
            <person name="Yoshikawa Y."/>
            <person name="Matsunawa H."/>
            <person name="Ichihara T."/>
            <person name="Shiohata N."/>
            <person name="Sano S."/>
            <person name="Moriya S."/>
            <person name="Momiyama H."/>
            <person name="Satoh N."/>
            <person name="Takami S."/>
            <person name="Terashima Y."/>
            <person name="Suzuki O."/>
            <person name="Nakagawa S."/>
            <person name="Senoh A."/>
            <person name="Mizoguchi H."/>
            <person name="Goto Y."/>
            <person name="Shimizu F."/>
            <person name="Wakebe H."/>
            <person name="Hishigaki H."/>
            <person name="Watanabe T."/>
            <person name="Sugiyama A."/>
            <person name="Takemoto M."/>
            <person name="Kawakami B."/>
            <person name="Yamazaki M."/>
            <person name="Watanabe K."/>
            <person name="Kumagai A."/>
            <person name="Itakura S."/>
            <person name="Fukuzumi Y."/>
            <person name="Fujimori Y."/>
            <person name="Komiyama M."/>
            <person name="Tashiro H."/>
            <person name="Tanigami A."/>
            <person name="Fujiwara T."/>
            <person name="Ono T."/>
            <person name="Yamada K."/>
            <person name="Fujii Y."/>
            <person name="Ozaki K."/>
            <person name="Hirao M."/>
            <person name="Ohmori Y."/>
            <person name="Kawabata A."/>
            <person name="Hikiji T."/>
            <person name="Kobatake N."/>
            <person name="Inagaki H."/>
            <person name="Ikema Y."/>
            <person name="Okamoto S."/>
            <person name="Okitani R."/>
            <person name="Kawakami T."/>
            <person name="Noguchi S."/>
            <person name="Itoh T."/>
            <person name="Shigeta K."/>
            <person name="Senba T."/>
            <person name="Matsumura K."/>
            <person name="Nakajima Y."/>
            <person name="Mizuno T."/>
            <person name="Morinaga M."/>
            <person name="Sasaki M."/>
            <person name="Togashi T."/>
            <person name="Oyama M."/>
            <person name="Hata H."/>
            <person name="Watanabe M."/>
            <person name="Komatsu T."/>
            <person name="Mizushima-Sugano J."/>
            <person name="Satoh T."/>
            <person name="Shirai Y."/>
            <person name="Takahashi Y."/>
            <person name="Nakagawa K."/>
            <person name="Okumura K."/>
            <person name="Nagase T."/>
            <person name="Nomura N."/>
            <person name="Kikuchi H."/>
            <person name="Masuho Y."/>
            <person name="Yamashita R."/>
            <person name="Nakai K."/>
            <person name="Yada T."/>
            <person name="Nakamura Y."/>
            <person name="Ohara O."/>
            <person name="Isogai T."/>
            <person name="Sugano S."/>
        </authorList>
    </citation>
    <scope>NUCLEOTIDE SEQUENCE [LARGE SCALE MRNA] (ISOFORMS 3; 4 AND 5)</scope>
    <source>
        <tissue>Brain</tissue>
        <tissue>Testis</tissue>
    </source>
</reference>
<reference key="4">
    <citation type="journal article" date="2003" name="Nature">
        <title>The DNA sequence of human chromosome 7.</title>
        <authorList>
            <person name="Hillier L.W."/>
            <person name="Fulton R.S."/>
            <person name="Fulton L.A."/>
            <person name="Graves T.A."/>
            <person name="Pepin K.H."/>
            <person name="Wagner-McPherson C."/>
            <person name="Layman D."/>
            <person name="Maas J."/>
            <person name="Jaeger S."/>
            <person name="Walker R."/>
            <person name="Wylie K."/>
            <person name="Sekhon M."/>
            <person name="Becker M.C."/>
            <person name="O'Laughlin M.D."/>
            <person name="Schaller M.E."/>
            <person name="Fewell G.A."/>
            <person name="Delehaunty K.D."/>
            <person name="Miner T.L."/>
            <person name="Nash W.E."/>
            <person name="Cordes M."/>
            <person name="Du H."/>
            <person name="Sun H."/>
            <person name="Edwards J."/>
            <person name="Bradshaw-Cordum H."/>
            <person name="Ali J."/>
            <person name="Andrews S."/>
            <person name="Isak A."/>
            <person name="Vanbrunt A."/>
            <person name="Nguyen C."/>
            <person name="Du F."/>
            <person name="Lamar B."/>
            <person name="Courtney L."/>
            <person name="Kalicki J."/>
            <person name="Ozersky P."/>
            <person name="Bielicki L."/>
            <person name="Scott K."/>
            <person name="Holmes A."/>
            <person name="Harkins R."/>
            <person name="Harris A."/>
            <person name="Strong C.M."/>
            <person name="Hou S."/>
            <person name="Tomlinson C."/>
            <person name="Dauphin-Kohlberg S."/>
            <person name="Kozlowicz-Reilly A."/>
            <person name="Leonard S."/>
            <person name="Rohlfing T."/>
            <person name="Rock S.M."/>
            <person name="Tin-Wollam A.-M."/>
            <person name="Abbott A."/>
            <person name="Minx P."/>
            <person name="Maupin R."/>
            <person name="Strowmatt C."/>
            <person name="Latreille P."/>
            <person name="Miller N."/>
            <person name="Johnson D."/>
            <person name="Murray J."/>
            <person name="Woessner J.P."/>
            <person name="Wendl M.C."/>
            <person name="Yang S.-P."/>
            <person name="Schultz B.R."/>
            <person name="Wallis J.W."/>
            <person name="Spieth J."/>
            <person name="Bieri T.A."/>
            <person name="Nelson J.O."/>
            <person name="Berkowicz N."/>
            <person name="Wohldmann P.E."/>
            <person name="Cook L.L."/>
            <person name="Hickenbotham M.T."/>
            <person name="Eldred J."/>
            <person name="Williams D."/>
            <person name="Bedell J.A."/>
            <person name="Mardis E.R."/>
            <person name="Clifton S.W."/>
            <person name="Chissoe S.L."/>
            <person name="Marra M.A."/>
            <person name="Raymond C."/>
            <person name="Haugen E."/>
            <person name="Gillett W."/>
            <person name="Zhou Y."/>
            <person name="James R."/>
            <person name="Phelps K."/>
            <person name="Iadanoto S."/>
            <person name="Bubb K."/>
            <person name="Simms E."/>
            <person name="Levy R."/>
            <person name="Clendenning J."/>
            <person name="Kaul R."/>
            <person name="Kent W.J."/>
            <person name="Furey T.S."/>
            <person name="Baertsch R.A."/>
            <person name="Brent M.R."/>
            <person name="Keibler E."/>
            <person name="Flicek P."/>
            <person name="Bork P."/>
            <person name="Suyama M."/>
            <person name="Bailey J.A."/>
            <person name="Portnoy M.E."/>
            <person name="Torrents D."/>
            <person name="Chinwalla A.T."/>
            <person name="Gish W.R."/>
            <person name="Eddy S.R."/>
            <person name="McPherson J.D."/>
            <person name="Olson M.V."/>
            <person name="Eichler E.E."/>
            <person name="Green E.D."/>
            <person name="Waterston R.H."/>
            <person name="Wilson R.K."/>
        </authorList>
    </citation>
    <scope>NUCLEOTIDE SEQUENCE [LARGE SCALE GENOMIC DNA]</scope>
</reference>
<reference key="5">
    <citation type="submission" date="2005-09" db="EMBL/GenBank/DDBJ databases">
        <authorList>
            <person name="Mural R.J."/>
            <person name="Istrail S."/>
            <person name="Sutton G.G."/>
            <person name="Florea L."/>
            <person name="Halpern A.L."/>
            <person name="Mobarry C.M."/>
            <person name="Lippert R."/>
            <person name="Walenz B."/>
            <person name="Shatkay H."/>
            <person name="Dew I."/>
            <person name="Miller J.R."/>
            <person name="Flanigan M.J."/>
            <person name="Edwards N.J."/>
            <person name="Bolanos R."/>
            <person name="Fasulo D."/>
            <person name="Halldorsson B.V."/>
            <person name="Hannenhalli S."/>
            <person name="Turner R."/>
            <person name="Yooseph S."/>
            <person name="Lu F."/>
            <person name="Nusskern D.R."/>
            <person name="Shue B.C."/>
            <person name="Zheng X.H."/>
            <person name="Zhong F."/>
            <person name="Delcher A.L."/>
            <person name="Huson D.H."/>
            <person name="Kravitz S.A."/>
            <person name="Mouchard L."/>
            <person name="Reinert K."/>
            <person name="Remington K.A."/>
            <person name="Clark A.G."/>
            <person name="Waterman M.S."/>
            <person name="Eichler E.E."/>
            <person name="Adams M.D."/>
            <person name="Hunkapiller M.W."/>
            <person name="Myers E.W."/>
            <person name="Venter J.C."/>
        </authorList>
    </citation>
    <scope>NUCLEOTIDE SEQUENCE [LARGE SCALE GENOMIC DNA]</scope>
</reference>
<reference key="6">
    <citation type="journal article" date="2004" name="Genome Res.">
        <title>The status, quality, and expansion of the NIH full-length cDNA project: the Mammalian Gene Collection (MGC).</title>
        <authorList>
            <consortium name="The MGC Project Team"/>
        </authorList>
    </citation>
    <scope>NUCLEOTIDE SEQUENCE [LARGE SCALE MRNA] (ISOFORM 2)</scope>
    <source>
        <tissue>Pancreas</tissue>
    </source>
</reference>
<reference key="7">
    <citation type="journal article" date="1996" name="Mol. Cell. Biol.">
        <title>Interaction of Vav with ENX-1, a putative transcriptional regulator of homeobox gene expression.</title>
        <authorList>
            <person name="Hobert O."/>
            <person name="Jallal B."/>
            <person name="Ullrich A."/>
        </authorList>
    </citation>
    <scope>NUCLEOTIDE SEQUENCE [GENOMIC DNA] OF 134-746</scope>
</reference>
<reference key="8">
    <citation type="journal article" date="1998" name="Hum. Mol. Genet.">
        <title>Specific interaction between the XNP/ATR-X gene product and the SET domain of the human EZH2 protein.</title>
        <authorList>
            <person name="Cardoso C."/>
            <person name="Timsit S."/>
            <person name="Villard L."/>
            <person name="Khrestchatisky M."/>
            <person name="Fontes M."/>
            <person name="Colleaux L."/>
        </authorList>
    </citation>
    <scope>INTERACTION WITH ATRX</scope>
</reference>
<reference key="9">
    <citation type="journal article" date="1998" name="Mol. Cell. Biol.">
        <title>Characterization of interactions between the mammalian polycomb-group proteins Enx1/EZH2 and EED suggests the existence of different mammalian polycomb-group protein complexes.</title>
        <authorList>
            <person name="Sewalt R.G.A.B."/>
            <person name="van der Vlag J."/>
            <person name="Gunster M.J."/>
            <person name="Hamer K.M."/>
            <person name="den Blaauwen J.L."/>
            <person name="Satijn D.P.E."/>
            <person name="Hendrix T."/>
            <person name="van Driel R."/>
            <person name="Otte A.P."/>
        </authorList>
    </citation>
    <scope>INTERACTION WITH EED</scope>
    <scope>SUBCELLULAR LOCATION</scope>
</reference>
<reference key="10">
    <citation type="journal article" date="1999" name="Nat. Genet.">
        <title>Transcriptional repression mediated by the human polycomb-group protein EED involves histone deacetylation.</title>
        <authorList>
            <person name="van der Vlag J."/>
            <person name="Otte A.P."/>
        </authorList>
    </citation>
    <scope>INTERACTION WITH EED; HDAC1 AND HDAC2</scope>
</reference>
<reference key="11">
    <citation type="journal article" date="2001" name="Mol. Cell. Biol.">
        <title>The polycomb group protein EED interacts with YY1, and both proteins induce neural tissue in Xenopus embryos.</title>
        <authorList>
            <person name="Satijn D.P.E."/>
            <person name="Hamer K.M."/>
            <person name="den Blaauwen J."/>
            <person name="Otte A.P."/>
        </authorList>
    </citation>
    <scope>INTERACTION WITH EED</scope>
</reference>
<reference key="12">
    <citation type="journal article" date="2002" name="Genes Dev.">
        <title>Histone methyltransferase activity associated with a human multiprotein complex containing the Enhancer of Zeste protein.</title>
        <authorList>
            <person name="Kuzmichev A."/>
            <person name="Nishioka K."/>
            <person name="Erdjument-Bromage H."/>
            <person name="Tempst P."/>
            <person name="Reinberg D."/>
        </authorList>
    </citation>
    <scope>IDENTIFICATION BY MASS SPECTROMETRY</scope>
    <scope>IDENTIFICATION IN THE PRC2 COMPLEX WITH EED; RBBP4; RBBP7 AND SUZ12</scope>
    <scope>METHYLTRANSFERASE ACTIVITY OF THE PRC2 COMPLEX</scope>
    <scope>MUTAGENESIS OF CYS-588 AND HIS-689</scope>
</reference>
<reference key="13">
    <citation type="journal article" date="2002" name="Mol. Cell. Biol.">
        <title>Selective interactions between vertebrate polycomb homologs and the SUV39H1 histone lysine methyltransferase suggest that histone H3-K9 methylation contributes to chromosomal targeting of Polycomb group proteins.</title>
        <authorList>
            <person name="Sewalt R.G.A.B."/>
            <person name="Lachner M."/>
            <person name="Vargas M."/>
            <person name="Hamer K.M."/>
            <person name="den Blaauwen J.L."/>
            <person name="Hendrix T."/>
            <person name="Melcher M."/>
            <person name="Schweizer D."/>
            <person name="Jenuwein T."/>
            <person name="Otte A.P."/>
        </authorList>
    </citation>
    <scope>SUBCELLULAR LOCATION</scope>
</reference>
<reference key="14">
    <citation type="journal article" date="2002" name="Science">
        <title>Role of histone H3 lysine 27 methylation in Polycomb-group silencing.</title>
        <authorList>
            <person name="Cao R."/>
            <person name="Wang L."/>
            <person name="Wang H."/>
            <person name="Xia L."/>
            <person name="Erdjument-Bromage H."/>
            <person name="Tempst P."/>
            <person name="Jones R.S."/>
            <person name="Zhang Y."/>
        </authorList>
    </citation>
    <scope>IDENTIFICATION BY MASS SPECTROMETRY</scope>
    <scope>IDENTIFICATION IN THE PRC2 COMPLEX WITH EED; RBBP4; RBBP7 AND SUZ12</scope>
    <scope>METHYLTRANSFERASE ACTIVITY OF THE PRC2 COMPLEX</scope>
</reference>
<reference key="15">
    <citation type="journal article" date="2003" name="EMBO J.">
        <title>EZH2 is downstream of the pRB-E2F pathway, essential for proliferation and amplified in cancer.</title>
        <authorList>
            <person name="Bracken A.P."/>
            <person name="Pasini D."/>
            <person name="Capra M."/>
            <person name="Prosperini E."/>
            <person name="Colli E."/>
            <person name="Helin K."/>
        </authorList>
    </citation>
    <scope>FUNCTION</scope>
    <scope>SUBCELLULAR LOCATION</scope>
    <scope>DEVELOPMENTAL STAGE</scope>
    <scope>INDUCTION</scope>
    <scope>TISSUE SPECIFICITY</scope>
</reference>
<reference key="16">
    <citation type="journal article" date="2004" name="EMBO J.">
        <title>Suz12 is essential for mouse development and for EZH2 histone methyltransferase activity.</title>
        <authorList>
            <person name="Pasini D."/>
            <person name="Bracken A.P."/>
            <person name="Jensen M.R."/>
            <person name="Lazzerini Denchi E."/>
            <person name="Helin K."/>
        </authorList>
    </citation>
    <scope>FUNCTION</scope>
    <scope>INTERACTION WITH EED AND SUZ12</scope>
    <scope>METHYLTRANSFERASE ACTIVITY OF THE PRC2 COMPLEX</scope>
</reference>
<reference key="17">
    <citation type="journal article" date="2004" name="Genes Dev.">
        <title>Silencing of human polycomb target genes is associated with methylation of histone H3 Lys 27.</title>
        <authorList>
            <person name="Kirmizis A."/>
            <person name="Bartley S.M."/>
            <person name="Kuzmichev A."/>
            <person name="Margueron R."/>
            <person name="Reinberg D."/>
            <person name="Green R."/>
            <person name="Farnham P.J."/>
        </authorList>
    </citation>
    <scope>FUNCTION</scope>
    <scope>SUBCELLULAR LOCATION</scope>
</reference>
<reference key="18">
    <citation type="journal article" date="2004" name="Mol. Cell">
        <title>Different EZH2-containing complexes target methylation of histone H1 or nucleosomal histone H3.</title>
        <authorList>
            <person name="Kuzmichev A."/>
            <person name="Jenuwein T."/>
            <person name="Tempst P."/>
            <person name="Reinberg D."/>
        </authorList>
    </citation>
    <scope>CHARACTERIZATION OF THE PRC2 AND PRC3 COMPLEXES INCLUDING EED; EZH2; RBBP4; RBBP7 AND SUZ12</scope>
    <scope>METHYLTRANSFERASE ACTIVITY OF THE PRC2 AND PRC3 COMPLEXES</scope>
</reference>
<reference key="19">
    <citation type="journal article" date="2004" name="Mol. Cell">
        <title>SUZ12 is required for both the histone methyltransferase activity and the silencing function of the EED-EZH2 complex.</title>
        <authorList>
            <person name="Cao R."/>
            <person name="Zhang Y."/>
        </authorList>
    </citation>
    <scope>FUNCTION</scope>
    <scope>CHARACTERIZATION OF THE PRC2 COMPLEX INCLUDING AEBP2; EED; EZH2; RBBP4 AND SUZ12</scope>
    <scope>METHYLTRANSFERASE ACTIVITY OF THE PRC2 COMPLEX</scope>
</reference>
<reference key="20">
    <citation type="journal article" date="2004" name="Oncogene">
        <title>Activated p53 suppresses the histone methyltransferase EZH2 gene.</title>
        <authorList>
            <person name="Tang X."/>
            <person name="Milyavsky M."/>
            <person name="Shats I."/>
            <person name="Erez N."/>
            <person name="Goldfinger N."/>
            <person name="Rotter V."/>
        </authorList>
    </citation>
    <scope>DEVELOPMENTAL STAGE</scope>
    <scope>INDUCTION</scope>
</reference>
<reference key="21">
    <citation type="journal article" date="2005" name="Cell">
        <title>The human tumor antigen PRAME is a dominant repressor of retinoic acid receptor signaling.</title>
        <authorList>
            <person name="Epping M.T."/>
            <person name="Wang L."/>
            <person name="Edel M.J."/>
            <person name="Carlee L."/>
            <person name="Hernandez M."/>
            <person name="Bernards R."/>
        </authorList>
    </citation>
    <scope>FUNCTION IN RETINOIC ACID SIGNALING</scope>
    <scope>INTERACTION WITH PRAME</scope>
</reference>
<reference key="22">
    <citation type="journal article" date="2005" name="Proc. Natl. Acad. Sci. U.S.A.">
        <title>Composition and histone substrates of polycomb repressive group complexes change during cellular differentiation.</title>
        <authorList>
            <person name="Kuzmichev A."/>
            <person name="Margueron R."/>
            <person name="Vaquero A."/>
            <person name="Preissner T.S."/>
            <person name="Scher M."/>
            <person name="Kirmizis A."/>
            <person name="Ouyang X."/>
            <person name="Brockdorff N."/>
            <person name="Abate-Shen C."/>
            <person name="Farnham P.J."/>
            <person name="Reinberg D."/>
        </authorList>
    </citation>
    <scope>CHARACTERIZATION OF THE PRC4 COMPLEX INCLUDING EED; EZH2; RBBP4; RBBP7; SUZ12 AND SIRT1</scope>
    <scope>METHYLTRANSFERASE ACTIVITY OF THE PRC4 COMPLEX</scope>
</reference>
<reference key="23">
    <citation type="journal article" date="2005" name="Science">
        <title>Akt-mediated phosphorylation of EZH2 suppresses methylation of lysine 27 in histone H3.</title>
        <authorList>
            <person name="Cha T.-L."/>
            <person name="Zhou B.P."/>
            <person name="Xia W."/>
            <person name="Wu Y."/>
            <person name="Yang C.-C."/>
            <person name="Chen C.-T."/>
            <person name="Ping B."/>
            <person name="Otte A.P."/>
            <person name="Hung M.-C."/>
        </authorList>
    </citation>
    <scope>INTERACTION WITH EED AND SUZ12</scope>
    <scope>PHOSPHORYLATION AT SER-21 BY AKT1</scope>
    <scope>MUTAGENESIS OF SER-21</scope>
</reference>
<reference key="24">
    <citation type="journal article" date="2006" name="Cell">
        <title>Global, in vivo, and site-specific phosphorylation dynamics in signaling networks.</title>
        <authorList>
            <person name="Olsen J.V."/>
            <person name="Blagoev B."/>
            <person name="Gnad F."/>
            <person name="Macek B."/>
            <person name="Kumar C."/>
            <person name="Mortensen P."/>
            <person name="Mann M."/>
        </authorList>
    </citation>
    <scope>PHOSPHORYLATION [LARGE SCALE ANALYSIS] AT THR-487</scope>
    <scope>IDENTIFICATION BY MASS SPECTROMETRY [LARGE SCALE ANALYSIS]</scope>
    <source>
        <tissue>Cervix carcinoma</tissue>
    </source>
</reference>
<reference key="25">
    <citation type="journal article" date="2006" name="Genes Dev.">
        <title>Genome-wide mapping of Polycomb target genes unravels their roles in cell fate transitions.</title>
        <authorList>
            <person name="Bracken A.P."/>
            <person name="Dietrich N."/>
            <person name="Pasini D."/>
            <person name="Hansen K.H."/>
            <person name="Helin K."/>
        </authorList>
    </citation>
    <scope>FUNCTION</scope>
</reference>
<reference key="26">
    <citation type="journal article" date="2006" name="J. Biol. Chem.">
        <title>Substrate preferences of the EZH2 histone methyltransferase complex.</title>
        <authorList>
            <person name="Martin C."/>
            <person name="Cao R."/>
            <person name="Zhang Y."/>
        </authorList>
    </citation>
    <scope>METHYLTRANSFERASE ACTIVITY OF THE PRC2 COMPLEX</scope>
</reference>
<reference key="27">
    <citation type="journal article" date="2006" name="J. Biol. Chem.">
        <title>The polycomb group protein EZH2 is required for mammalian circadian clock function.</title>
        <authorList>
            <person name="Etchegaray J.P."/>
            <person name="Yang X."/>
            <person name="DeBruyne J.P."/>
            <person name="Peters A.H."/>
            <person name="Weaver D.R."/>
            <person name="Jenuwein T."/>
            <person name="Reppert S.M."/>
        </authorList>
    </citation>
    <scope>FUNCTION</scope>
</reference>
<reference key="28">
    <citation type="journal article" date="2006" name="Nat. Biotechnol.">
        <title>A probability-based approach for high-throughput protein phosphorylation analysis and site localization.</title>
        <authorList>
            <person name="Beausoleil S.A."/>
            <person name="Villen J."/>
            <person name="Gerber S.A."/>
            <person name="Rush J."/>
            <person name="Gygi S.P."/>
        </authorList>
    </citation>
    <scope>PHOSPHORYLATION [LARGE SCALE ANALYSIS] AT THR-487</scope>
    <scope>IDENTIFICATION BY MASS SPECTROMETRY [LARGE SCALE ANALYSIS]</scope>
    <source>
        <tissue>Cervix carcinoma</tissue>
    </source>
</reference>
<reference key="29">
    <citation type="journal article" date="2006" name="Nature">
        <title>The Polycomb group protein EZH2 directly controls DNA methylation.</title>
        <authorList>
            <person name="Vire E."/>
            <person name="Brenner C."/>
            <person name="Deplus R."/>
            <person name="Blanchon L."/>
            <person name="Fraga M."/>
            <person name="Didelot C."/>
            <person name="Morey L."/>
            <person name="Van Eynde A."/>
            <person name="Bernard D."/>
            <person name="Vanderwinden J.-M."/>
            <person name="Bollen M."/>
            <person name="Esteller M."/>
            <person name="Di Croce L."/>
            <person name="de Launoit Y."/>
            <person name="Fuks F."/>
        </authorList>
    </citation>
    <scope>FUNCTION</scope>
    <scope>INTERACTION OF THE PRC2 COMPLEX WITH DNMT1; DNMT3A AND DNMT3B</scope>
</reference>
<reference key="30">
    <citation type="journal article" date="2006" name="Nature">
        <authorList>
            <person name="Vire E."/>
            <person name="Brenner C."/>
            <person name="Deplus R."/>
            <person name="Blanchon L."/>
            <person name="Fraga M."/>
            <person name="Didelot C."/>
            <person name="Morey L."/>
            <person name="Van Eynde A."/>
            <person name="Bernard D."/>
            <person name="Vanderwinden J.-M."/>
            <person name="Bollen M."/>
            <person name="Esteller M."/>
            <person name="Di Croce L."/>
            <person name="de Launoit Y."/>
            <person name="Fuks F."/>
        </authorList>
    </citation>
    <scope>ERRATUM OF PUBMED:16357870</scope>
</reference>
<reference key="31">
    <citation type="journal article" date="2006" name="Nat. Struct. Mol. Biol.">
        <title>Argonaute-1 directs siRNA-mediated transcriptional gene silencing in human cells.</title>
        <authorList>
            <person name="Kim D.H."/>
            <person name="Villeneuve L.M."/>
            <person name="Morris K.V."/>
            <person name="Rossi J.J."/>
        </authorList>
    </citation>
    <scope>FUNCTION</scope>
</reference>
<reference key="32">
    <citation type="journal article" date="2007" name="Genes Dev.">
        <title>pRB family proteins are required for H3K27 trimethylation and Polycomb repression complexes binding to and silencing p16INK4alpha tumor suppressor gene.</title>
        <authorList>
            <person name="Kotake Y."/>
            <person name="Cao R."/>
            <person name="Viatour P."/>
            <person name="Sage J."/>
            <person name="Zhang Y."/>
            <person name="Xiong Y."/>
        </authorList>
    </citation>
    <scope>FUNCTION</scope>
</reference>
<reference key="33">
    <citation type="journal article" date="2007" name="Genes Dev.">
        <title>The Polycomb group proteins bind throughout the INK4A-ARF locus and are disassociated in senescent cells.</title>
        <authorList>
            <person name="Bracken A.P."/>
            <person name="Kleine-Kohlbrecher D."/>
            <person name="Dietrich N."/>
            <person name="Pasini D."/>
            <person name="Gargiulo G."/>
            <person name="Beekman C."/>
            <person name="Theilgaard-Moench K."/>
            <person name="Minucci S."/>
            <person name="Porse B.T."/>
            <person name="Marine J.-C."/>
            <person name="Hansen K.H."/>
            <person name="Helin K."/>
        </authorList>
    </citation>
    <scope>FUNCTION</scope>
    <scope>DEVELOPMENTAL STAGE</scope>
    <scope>INDUCTION</scope>
</reference>
<reference key="34">
    <citation type="journal article" date="2007" name="Nat. Genet.">
        <title>Polycomb-mediated methylation on Lys27 of histone H3 pre-marks genes for de novo methylation in cancer.</title>
        <authorList>
            <person name="Schlesinger Y."/>
            <person name="Straussman R."/>
            <person name="Keshet I."/>
            <person name="Farkash S."/>
            <person name="Hecht M."/>
            <person name="Zimmerman J."/>
            <person name="Eden E."/>
            <person name="Yakhini Z."/>
            <person name="Ben-Shushan E."/>
            <person name="Reubinoff B.E."/>
            <person name="Bergman Y."/>
            <person name="Simon I."/>
            <person name="Cedar H."/>
        </authorList>
    </citation>
    <scope>DE NOVO DNA METHYLATION OF PRC2 TARGET GENES</scope>
</reference>
<reference key="35">
    <citation type="journal article" date="2008" name="J. Proteome Res.">
        <title>Combining protein-based IMAC, peptide-based IMAC, and MudPIT for efficient phosphoproteomic analysis.</title>
        <authorList>
            <person name="Cantin G.T."/>
            <person name="Yi W."/>
            <person name="Lu B."/>
            <person name="Park S.K."/>
            <person name="Xu T."/>
            <person name="Lee J.-D."/>
            <person name="Yates J.R. III"/>
        </authorList>
    </citation>
    <scope>PHOSPHORYLATION [LARGE SCALE ANALYSIS] AT THR-487</scope>
    <scope>IDENTIFICATION BY MASS SPECTROMETRY [LARGE SCALE ANALYSIS]</scope>
    <source>
        <tissue>Cervix carcinoma</tissue>
    </source>
</reference>
<reference key="36">
    <citation type="journal article" date="2008" name="Mol. Cell">
        <title>Kinase-selective enrichment enables quantitative phosphoproteomics of the kinome across the cell cycle.</title>
        <authorList>
            <person name="Daub H."/>
            <person name="Olsen J.V."/>
            <person name="Bairlein M."/>
            <person name="Gnad F."/>
            <person name="Oppermann F.S."/>
            <person name="Korner R."/>
            <person name="Greff Z."/>
            <person name="Keri G."/>
            <person name="Stemmann O."/>
            <person name="Mann M."/>
        </authorList>
    </citation>
    <scope>PHOSPHORYLATION [LARGE SCALE ANALYSIS] AT THR-487</scope>
    <scope>IDENTIFICATION BY MASS SPECTROMETRY [LARGE SCALE ANALYSIS]</scope>
    <source>
        <tissue>Cervix carcinoma</tissue>
    </source>
</reference>
<reference key="37">
    <citation type="journal article" date="2008" name="Mol. Cell">
        <title>Ezh1 and Ezh2 maintain repressive chromatin through different mechanisms.</title>
        <authorList>
            <person name="Margueron R."/>
            <person name="Li G."/>
            <person name="Sarma K."/>
            <person name="Blais A."/>
            <person name="Zavadil J."/>
            <person name="Woodcock C.L."/>
            <person name="Dynlacht B.D."/>
            <person name="Reinberg D."/>
        </authorList>
    </citation>
    <scope>FUNCTION</scope>
    <scope>IDENTIFICATION IN THE PRC2/EED-EZH1 COMPLEX</scope>
</reference>
<reference key="38">
    <citation type="journal article" date="2008" name="Mol. Cell. Biol.">
        <title>Role of hPHF1 in H3K27 methylation and Hox gene silencing.</title>
        <authorList>
            <person name="Cao R."/>
            <person name="Wang H."/>
            <person name="He J."/>
            <person name="Erdjument-Bromage H."/>
            <person name="Tempst P."/>
            <person name="Zhang Y."/>
        </authorList>
    </citation>
    <scope>IDENTIFICATION BY MASS SPECTROMETRY</scope>
    <scope>IDENTIFICATION IN THE PRC2 COMPLEX</scope>
    <scope>METHYLTRANSFERASE ACTIVITY OF THE PRC2 COMPLEX</scope>
</reference>
<reference key="39">
    <citation type="journal article" date="2008" name="Mol. Cell. Biol.">
        <title>Ezh2 requires PHF1 to efficiently catalyze H3 lysine 27 trimethylation in vivo.</title>
        <authorList>
            <person name="Sarma K."/>
            <person name="Margueron R."/>
            <person name="Ivanov A."/>
            <person name="Pirrotta V."/>
            <person name="Reinberg D."/>
        </authorList>
    </citation>
    <scope>FUNCTION</scope>
    <scope>INTERACTION WITH EED; SUZ12 AND PHF1</scope>
    <scope>METHYLTRANSFERASE ACTIVITY OF THE PRC2 COMPLEX</scope>
    <scope>MUTAGENESIS OF HIS-689</scope>
</reference>
<reference key="40">
    <citation type="journal article" date="2008" name="PLoS ONE">
        <title>The polycomb repressive complex 2 is a potential target of SUMO modifications.</title>
        <authorList>
            <person name="Riising E.M."/>
            <person name="Boggio R."/>
            <person name="Chiocca S."/>
            <person name="Helin K."/>
            <person name="Pasini D."/>
        </authorList>
    </citation>
    <scope>SUMOYLATION</scope>
</reference>
<reference key="41">
    <citation type="journal article" date="2008" name="Proc. Natl. Acad. Sci. U.S.A.">
        <title>A quantitative atlas of mitotic phosphorylation.</title>
        <authorList>
            <person name="Dephoure N."/>
            <person name="Zhou C."/>
            <person name="Villen J."/>
            <person name="Beausoleil S.A."/>
            <person name="Bakalarski C.E."/>
            <person name="Elledge S.J."/>
            <person name="Gygi S.P."/>
        </authorList>
    </citation>
    <scope>PHOSPHORYLATION [LARGE SCALE ANALYSIS] AT SER-366; THR-367 AND THR-487</scope>
    <scope>IDENTIFICATION BY MASS SPECTROMETRY [LARGE SCALE ANALYSIS]</scope>
    <source>
        <tissue>Cervix carcinoma</tissue>
    </source>
</reference>
<reference key="42">
    <citation type="journal article" date="2009" name="Anal. Chem.">
        <title>Lys-N and trypsin cover complementary parts of the phosphoproteome in a refined SCX-based approach.</title>
        <authorList>
            <person name="Gauci S."/>
            <person name="Helbig A.O."/>
            <person name="Slijper M."/>
            <person name="Krijgsveld J."/>
            <person name="Heck A.J."/>
            <person name="Mohammed S."/>
        </authorList>
    </citation>
    <scope>IDENTIFICATION BY MASS SPECTROMETRY [LARGE SCALE ANALYSIS]</scope>
</reference>
<reference key="43">
    <citation type="journal article" date="2009" name="Sci. Signal.">
        <title>Quantitative phosphoproteomic analysis of T cell receptor signaling reveals system-wide modulation of protein-protein interactions.</title>
        <authorList>
            <person name="Mayya V."/>
            <person name="Lundgren D.H."/>
            <person name="Hwang S.-I."/>
            <person name="Rezaul K."/>
            <person name="Wu L."/>
            <person name="Eng J.K."/>
            <person name="Rodionov V."/>
            <person name="Han D.K."/>
        </authorList>
    </citation>
    <scope>PHOSPHORYLATION [LARGE SCALE ANALYSIS] AT THR-487</scope>
    <scope>IDENTIFICATION BY MASS SPECTROMETRY [LARGE SCALE ANALYSIS]</scope>
    <source>
        <tissue>Leukemic T-cell</tissue>
    </source>
</reference>
<reference key="44">
    <citation type="journal article" date="2010" name="Nat. Cell Biol.">
        <title>Cyclin-dependent kinases regulate epigenetic gene silencing through phosphorylation of EZH2.</title>
        <authorList>
            <person name="Chen S."/>
            <person name="Bohrer L.R."/>
            <person name="Rai A.N."/>
            <person name="Pan Y."/>
            <person name="Gan L."/>
            <person name="Zhou X."/>
            <person name="Bagchi A."/>
            <person name="Simon J.A."/>
            <person name="Huang H."/>
        </authorList>
    </citation>
    <scope>FUNCTION</scope>
    <scope>PHOSPHORYLATION AT THR-345 BY CDK1 AND CDK2</scope>
    <scope>MUTAGENESIS OF THR-345</scope>
</reference>
<reference key="45">
    <citation type="journal article" date="2010" name="Sci. Signal.">
        <title>Quantitative phosphoproteomics reveals widespread full phosphorylation site occupancy during mitosis.</title>
        <authorList>
            <person name="Olsen J.V."/>
            <person name="Vermeulen M."/>
            <person name="Santamaria A."/>
            <person name="Kumar C."/>
            <person name="Miller M.L."/>
            <person name="Jensen L.J."/>
            <person name="Gnad F."/>
            <person name="Cox J."/>
            <person name="Jensen T.S."/>
            <person name="Nigg E.A."/>
            <person name="Brunak S."/>
            <person name="Mann M."/>
        </authorList>
    </citation>
    <scope>PHOSPHORYLATION [LARGE SCALE ANALYSIS] AT THR-487</scope>
    <scope>IDENTIFICATION BY MASS SPECTROMETRY [LARGE SCALE ANALYSIS]</scope>
    <source>
        <tissue>Cervix carcinoma</tissue>
    </source>
</reference>
<reference key="46">
    <citation type="journal article" date="2011" name="J. Biol. Chem.">
        <title>Corepressor protein CDYL functions as a molecular bridge between polycomb repressor complex 2 and repressive chromatin mark trimethylated histone lysine 27.</title>
        <authorList>
            <person name="Zhang Y."/>
            <person name="Yang X."/>
            <person name="Gui B."/>
            <person name="Xie G."/>
            <person name="Zhang D."/>
            <person name="Shang Y."/>
            <person name="Liang J."/>
        </authorList>
    </citation>
    <scope>INTERACTION WITH CDYL</scope>
</reference>
<reference key="47">
    <citation type="journal article" date="2011" name="Sci. Signal.">
        <title>System-wide temporal characterization of the proteome and phosphoproteome of human embryonic stem cell differentiation.</title>
        <authorList>
            <person name="Rigbolt K.T."/>
            <person name="Prokhorova T.A."/>
            <person name="Akimov V."/>
            <person name="Henningsen J."/>
            <person name="Johansen P.T."/>
            <person name="Kratchmarova I."/>
            <person name="Kassem M."/>
            <person name="Mann M."/>
            <person name="Olsen J.V."/>
            <person name="Blagoev B."/>
        </authorList>
    </citation>
    <scope>PHOSPHORYLATION [LARGE SCALE ANALYSIS] AT THR-487</scope>
    <scope>IDENTIFICATION BY MASS SPECTROMETRY [LARGE SCALE ANALYSIS]</scope>
</reference>
<reference key="48">
    <citation type="journal article" date="2012" name="Mol. Cell">
        <title>EZH2 generates a methyl degron that is recognized by the DCAF1/DDB1/CUL4 E3 ubiquitin ligase complex.</title>
        <authorList>
            <person name="Lee J.M."/>
            <person name="Lee J.S."/>
            <person name="Kim H."/>
            <person name="Kim K."/>
            <person name="Park H."/>
            <person name="Kim J.Y."/>
            <person name="Lee S.H."/>
            <person name="Kim I.S."/>
            <person name="Kim J."/>
            <person name="Lee M."/>
            <person name="Chung C.H."/>
            <person name="Seo S.B."/>
            <person name="Yoon J.B."/>
            <person name="Ko E."/>
            <person name="Noh D.Y."/>
            <person name="Kim K.I."/>
            <person name="Kim K.K."/>
            <person name="Baek S.H."/>
        </authorList>
    </citation>
    <scope>FUNCTION</scope>
</reference>
<reference key="49">
    <citation type="journal article" date="2013" name="J. Proteome Res.">
        <title>Toward a comprehensive characterization of a human cancer cell phosphoproteome.</title>
        <authorList>
            <person name="Zhou H."/>
            <person name="Di Palma S."/>
            <person name="Preisinger C."/>
            <person name="Peng M."/>
            <person name="Polat A.N."/>
            <person name="Heck A.J."/>
            <person name="Mohammed S."/>
        </authorList>
    </citation>
    <scope>PHOSPHORYLATION [LARGE SCALE ANALYSIS] AT SER-76; THR-339; SER-363; THR-367 AND THR-487</scope>
    <scope>IDENTIFICATION BY MASS SPECTROMETRY [LARGE SCALE ANALYSIS]</scope>
    <source>
        <tissue>Cervix carcinoma</tissue>
        <tissue>Erythroleukemia</tissue>
    </source>
</reference>
<reference key="50">
    <citation type="journal article" date="2014" name="Proc. Natl. Acad. Sci. U.S.A.">
        <title>O-GlcNAcylation regulates EZH2 protein stability and function.</title>
        <authorList>
            <person name="Chu C.S."/>
            <person name="Lo P.W."/>
            <person name="Yeh Y.H."/>
            <person name="Hsu P.H."/>
            <person name="Peng S.H."/>
            <person name="Teng Y.C."/>
            <person name="Kang M.L."/>
            <person name="Wong C.H."/>
            <person name="Juan L.J."/>
        </authorList>
    </citation>
    <scope>GLYCOSYLATION AT SER-75</scope>
    <scope>MUTAGENESIS OF SER-75</scope>
    <scope>FUNCTION</scope>
</reference>
<reference key="51">
    <citation type="journal article" date="2017" name="Nat. Struct. Mol. Biol.">
        <title>Site-specific mapping of the human SUMO proteome reveals co-modification with phosphorylation.</title>
        <authorList>
            <person name="Hendriks I.A."/>
            <person name="Lyon D."/>
            <person name="Young C."/>
            <person name="Jensen L.J."/>
            <person name="Vertegaal A.C."/>
            <person name="Nielsen M.L."/>
        </authorList>
    </citation>
    <scope>SUMOYLATION [LARGE SCALE ANALYSIS] AT LYS-634</scope>
    <scope>IDENTIFICATION BY MASS SPECTROMETRY [LARGE SCALE ANALYSIS]</scope>
</reference>
<reference key="52">
    <citation type="journal article" date="2018" name="Nat. Commun.">
        <title>Armadillo repeat containing 12 promotes neuroblastoma progression through interaction with retinoblastoma binding protein 4.</title>
        <authorList>
            <person name="Li D."/>
            <person name="Song H."/>
            <person name="Mei H."/>
            <person name="Fang E."/>
            <person name="Wang X."/>
            <person name="Yang F."/>
            <person name="Li H."/>
            <person name="Chen Y."/>
            <person name="Huang K."/>
            <person name="Zheng L."/>
            <person name="Tong Q."/>
        </authorList>
    </citation>
    <scope>FUNCTION</scope>
    <scope>INTERACTION WITH ARMC12</scope>
</reference>
<reference key="53">
    <citation type="journal article" date="2019" name="Nat. Commun.">
        <title>PFA ependymoma-associated protein EZHIP inhibits PRC2 activity through a H3 K27M-like mechanism.</title>
        <authorList>
            <person name="Jain S.U."/>
            <person name="Do T.J."/>
            <person name="Lund P.J."/>
            <person name="Rashoff A.Q."/>
            <person name="Diehl K.L."/>
            <person name="Cieslik M."/>
            <person name="Bajic A."/>
            <person name="Juretic N."/>
            <person name="Deshmukh S."/>
            <person name="Venneti S."/>
            <person name="Muir T.W."/>
            <person name="Garcia B.A."/>
            <person name="Jabado N."/>
            <person name="Lewis P.W."/>
        </authorList>
    </citation>
    <scope>INTERACTION WITH EZHIP</scope>
</reference>
<reference key="54">
    <citation type="journal article" date="2019" name="Nat. Commun.">
        <title>EZHIP constrains Polycomb Repressive Complex 2 activity in germ cells.</title>
        <authorList>
            <person name="Ragazzini R."/>
            <person name="Perez-Palacios R."/>
            <person name="Baymaz I.H."/>
            <person name="Diop S."/>
            <person name="Ancelin K."/>
            <person name="Zielinski D."/>
            <person name="Michaud A."/>
            <person name="Givelet M."/>
            <person name="Borsos M."/>
            <person name="Aflaki S."/>
            <person name="Legoix P."/>
            <person name="Jansen P.W.T.C."/>
            <person name="Servant N."/>
            <person name="Torres-Padilla M.E."/>
            <person name="Bourc'his D."/>
            <person name="Fouchet P."/>
            <person name="Vermeulen M."/>
            <person name="Margueron R."/>
        </authorList>
    </citation>
    <scope>INTERACTION WITH EZHIP</scope>
    <scope>TISSUE SPECIFICITY</scope>
</reference>
<reference key="55">
    <citation type="journal article" date="2019" name="Neuro-oncol.">
        <title>EZHIP / CXorf67 mimics K27M mutated oncohistones and functions as an intrinsic inhibitor of PRC2 function in aggressive posterior fossa ependymoma.</title>
        <authorList>
            <person name="Huebner J.M."/>
            <person name="Mueller T."/>
            <person name="Papageorgiou D.N."/>
            <person name="Mauermann M."/>
            <person name="Krijgsveld J."/>
            <person name="Russell R.B."/>
            <person name="Ellison D.W."/>
            <person name="Pfister S.M."/>
            <person name="Pajtler K.W."/>
            <person name="Kool M."/>
        </authorList>
    </citation>
    <scope>FUNCTION</scope>
    <scope>INTERACTION WITH EZHIP</scope>
</reference>
<reference key="56">
    <citation type="journal article" date="2020" name="Cell Death Dis.">
        <title>Suppression of poised oncogenes by ZMYND8 promotes chemo-sensitization.</title>
        <authorList>
            <person name="Mukherjee S."/>
            <person name="Adhikary S."/>
            <person name="Gadad S.S."/>
            <person name="Mondal P."/>
            <person name="Sen S."/>
            <person name="Choudhari R."/>
            <person name="Singh V."/>
            <person name="Adhikari S."/>
            <person name="Mandal P."/>
            <person name="Chaudhuri S."/>
            <person name="Sengupta A."/>
            <person name="Lakshmanaswamy R."/>
            <person name="Chakrabarti P."/>
            <person name="Roy S."/>
            <person name="Das C."/>
        </authorList>
    </citation>
    <scope>INTERACTION WITH ZMYND8</scope>
</reference>
<reference key="57">
    <citation type="journal article" date="2020" name="Oncogene">
        <title>The EGFR-ZNF263 signaling axis silences SIX3 in glioblastoma epigenetically.</title>
        <authorList>
            <person name="Yu Z."/>
            <person name="Feng J."/>
            <person name="Wang W."/>
            <person name="Deng Z."/>
            <person name="Zhang Y."/>
            <person name="Xiao L."/>
            <person name="Wang Z."/>
            <person name="Liu C."/>
            <person name="Liu Q."/>
            <person name="Chen S."/>
            <person name="Wu M."/>
        </authorList>
    </citation>
    <scope>INTERACTION WITH ZNF263</scope>
</reference>
<reference key="58">
    <citation type="journal article" date="2022" name="Cell Death Dis.">
        <title>ZMYND8 suppresses MAPT213 LncRNA transcription to promote neuronal differentiation.</title>
        <authorList>
            <person name="Adhikary S."/>
            <person name="Singh V."/>
            <person name="Choudhari R."/>
            <person name="Yang B."/>
            <person name="Adhikari S."/>
            <person name="Ramos E.I."/>
            <person name="Chaudhuri S."/>
            <person name="Roy S."/>
            <person name="Gadad S.S."/>
            <person name="Das C."/>
        </authorList>
    </citation>
    <scope>INTERACTION WITH ZMYND8</scope>
</reference>
<reference key="59">
    <citation type="journal article" date="2010" name="Nat. Genet.">
        <title>Somatic mutations altering EZH2 (Tyr641) in follicular and diffuse large B-cell lymphomas of germinal-center origin.</title>
        <authorList>
            <person name="Morin R.D."/>
            <person name="Johnson N.A."/>
            <person name="Severson T.M."/>
            <person name="Mungall A.J."/>
            <person name="An J."/>
            <person name="Goya R."/>
            <person name="Paul J.E."/>
            <person name="Boyle M."/>
            <person name="Woolcock B.W."/>
            <person name="Kuchenbauer F."/>
            <person name="Yap D."/>
            <person name="Humphries R.K."/>
            <person name="Griffith O.L."/>
            <person name="Shah S."/>
            <person name="Zhu H."/>
            <person name="Kimbara M."/>
            <person name="Shashkin P."/>
            <person name="Charlot J.F."/>
            <person name="Tcherpakov M."/>
            <person name="Corbett R."/>
            <person name="Tam A."/>
            <person name="Varhol R."/>
            <person name="Smailus D."/>
            <person name="Moksa M."/>
            <person name="Zhao Y."/>
            <person name="Delaney A."/>
            <person name="Qian H."/>
            <person name="Birol I."/>
            <person name="Schein J."/>
            <person name="Moore R."/>
            <person name="Holt R."/>
            <person name="Horsman D.E."/>
            <person name="Connors J.M."/>
            <person name="Jones S."/>
            <person name="Aparicio S."/>
            <person name="Hirst M."/>
            <person name="Gascoyne R.D."/>
            <person name="Marra M.A."/>
        </authorList>
    </citation>
    <scope>VARIANTS PHE-641; SER-641; ASN-641; HIS-641 AND CYS-641</scope>
</reference>
<reference key="60">
    <citation type="journal article" date="2010" name="Nat. Genet.">
        <title>Inactivating mutations of the histone methyltransferase gene EZH2 in myeloid disorders.</title>
        <authorList>
            <person name="Ernst T."/>
            <person name="Chase A.J."/>
            <person name="Score J."/>
            <person name="Hidalgo-Curtis C.E."/>
            <person name="Bryant C."/>
            <person name="Jones A.V."/>
            <person name="Waghorn K."/>
            <person name="Zoi K."/>
            <person name="Ross F.M."/>
            <person name="Reiter A."/>
            <person name="Hochhaus A."/>
            <person name="Drexler H.G."/>
            <person name="Duncombe A."/>
            <person name="Cervantes F."/>
            <person name="Oscier D."/>
            <person name="Boultwood J."/>
            <person name="Grand F.H."/>
            <person name="Cross N.C."/>
        </authorList>
    </citation>
    <scope>VARIANTS TRP-571; CYS-641; CYS-685 AND ASP-726</scope>
    <scope>CHARACTERIZATION OF VARIANTS TRP-571; CYS-641; CYS-685 AND ASP-726</scope>
</reference>
<reference key="61">
    <citation type="journal article" date="2011" name="Blood">
        <title>Somatic mutations at EZH2 Y641 act dominantly through a mechanism of selectively altered PRC2 catalytic activity, to increase H3K27 trimethylation.</title>
        <authorList>
            <person name="Yap D.B."/>
            <person name="Chu J."/>
            <person name="Berg T."/>
            <person name="Schapira M."/>
            <person name="Cheng S.W."/>
            <person name="Moradian A."/>
            <person name="Morin R.D."/>
            <person name="Mungall A.J."/>
            <person name="Meissner B."/>
            <person name="Boyle M."/>
            <person name="Marquez V.E."/>
            <person name="Marra M.A."/>
            <person name="Gascoyne R.D."/>
            <person name="Humphries R.K."/>
            <person name="Arrowsmith C.H."/>
            <person name="Morin G.B."/>
            <person name="Aparicio S.A."/>
        </authorList>
    </citation>
    <scope>CHARACTERIZATION OF VARIANTS PHE-641 AND ASN-641</scope>
</reference>
<reference key="62">
    <citation type="journal article" date="2011" name="Blood">
        <title>Mutational spectrum analysis of chronic myelomonocytic leukemia includes genes associated with epigenetic regulation: UTX, EZH2, and DNMT3A.</title>
        <authorList>
            <person name="Jankowska A.M."/>
            <person name="Makishima H."/>
            <person name="Tiu R.V."/>
            <person name="Szpurka H."/>
            <person name="Huang Y."/>
            <person name="Traina F."/>
            <person name="Visconte V."/>
            <person name="Sugimoto Y."/>
            <person name="Prince C."/>
            <person name="O'Keefe C."/>
            <person name="Hsi E.D."/>
            <person name="List A."/>
            <person name="Sekeres M.A."/>
            <person name="Rao A."/>
            <person name="McDevitt M.A."/>
            <person name="Maciejewski J.P."/>
        </authorList>
    </citation>
    <scope>VARIANT HIS-685</scope>
</reference>
<reference key="63">
    <citation type="journal article" date="2011" name="Oncotarget">
        <title>Germline mutations in the oncogene EZH2 cause Weaver syndrome and increased human height.</title>
        <authorList>
            <consortium name="Childhood Overgrowth Collaboration"/>
            <person name="Tatton-Brown K."/>
            <person name="Hanks S."/>
            <person name="Ruark E."/>
            <person name="Zachariou A."/>
            <person name="Duarte S.V."/>
            <person name="Ramsay E."/>
            <person name="Snape K."/>
            <person name="Murray A."/>
            <person name="Perdeaux E.R."/>
            <person name="Seal S."/>
            <person name="Loveday C."/>
            <person name="Banka S."/>
            <person name="Clericuzio C."/>
            <person name="Flinter F."/>
            <person name="Magee A."/>
            <person name="McConnell V."/>
            <person name="Patton M."/>
            <person name="Raith W."/>
            <person name="Rankin J."/>
            <person name="Splitt M."/>
            <person name="Strenger V."/>
            <person name="Taylor C."/>
            <person name="Wheeler P."/>
            <person name="Temple K.I."/>
            <person name="Cole T."/>
            <person name="Douglas J."/>
            <person name="Rahman N."/>
        </authorList>
    </citation>
    <scope>VARIANTS WVS THR-134; GLU-156; ARG-279; MET-621; ASN-658; THR-677; CYS-679; LEU-690; 728-TYR--PRO-746 DEL AND CYS-736</scope>
</reference>
<reference key="64">
    <citation type="journal article" date="2012" name="Am. J. Hum. Genet.">
        <title>Mutations in EZH2 cause Weaver syndrome.</title>
        <authorList>
            <person name="Gibson W.T."/>
            <person name="Hood R.L."/>
            <person name="Zhan S.H."/>
            <person name="Bulman D.E."/>
            <person name="Fejes A.P."/>
            <person name="Moore R."/>
            <person name="Mungall A.J."/>
            <person name="Eydoux P."/>
            <person name="Babul-Hirji R."/>
            <person name="An J."/>
            <person name="Marra M.A."/>
            <person name="Chitayat D."/>
            <person name="Boycott K.M."/>
            <person name="Weaver D.D."/>
            <person name="Jones S.J."/>
        </authorList>
    </citation>
    <scope>VARIANTS WVS SER-132; TYR-153 DEL AND TYR-689</scope>
</reference>
<reference key="65">
    <citation type="journal article" date="2012" name="Proc. Natl. Acad. Sci. U.S.A.">
        <title>Mutation of A677 in histone methyltransferase EZH2 in human B-cell lymphoma promotes hypertrimethylation of histone H3 on lysine 27 (H3K27).</title>
        <authorList>
            <person name="McCabe M.T."/>
            <person name="Graves A.P."/>
            <person name="Ganji G."/>
            <person name="Diaz E."/>
            <person name="Halsey W.S."/>
            <person name="Jiang Y."/>
            <person name="Smitheman K.N."/>
            <person name="Ott H.M."/>
            <person name="Pappalardi M.B."/>
            <person name="Allen K.E."/>
            <person name="Chen S.B."/>
            <person name="Della Pietra A. III"/>
            <person name="Dul E."/>
            <person name="Hughes A.M."/>
            <person name="Gilbert S.A."/>
            <person name="Thrall S.H."/>
            <person name="Tummino P.J."/>
            <person name="Kruger R.G."/>
            <person name="Brandt M."/>
            <person name="Schwartz B."/>
            <person name="Creasy C.L."/>
        </authorList>
    </citation>
    <scope>VARIANT GLY-677</scope>
    <scope>CHARACTERIZATION OF VARIANTS ASN-641; CYS-641; HIS-641; PHE-641 AND GLY-677</scope>
    <scope>FUNCTION</scope>
    <scope>CATALYTIC ACTIVITY</scope>
</reference>
<reference key="66">
    <citation type="journal article" date="2013" name="Am. J. Med. Genet. A">
        <title>Weaver syndrome and defective cortical development: a rare association.</title>
        <authorList>
            <person name="Al-Salem A."/>
            <person name="Alshammari M.J."/>
            <person name="Hassan H."/>
            <person name="Alazami A.M."/>
            <person name="Alkuraya F.S."/>
        </authorList>
    </citation>
    <scope>VARIANT WVS LYS-740</scope>
</reference>
<reference key="67">
    <citation type="journal article" date="2016" name="Hum. Mutat.">
        <title>Weaver Syndrome-Associated EZH2 Protein Variants Show Impaired Histone Methyltransferase Function In Vitro.</title>
        <authorList>
            <person name="Cohen A.S."/>
            <person name="Yap D.B."/>
            <person name="Lewis M.E."/>
            <person name="Chijiwa C."/>
            <person name="Ramos-Arroyo M.A."/>
            <person name="Tkachenko N."/>
            <person name="Milano V."/>
            <person name="Fradin M."/>
            <person name="McKinnon M.L."/>
            <person name="Townsend K.N."/>
            <person name="Xu J."/>
            <person name="Van Allen M.I."/>
            <person name="Ross C.J."/>
            <person name="Dobyns W.B."/>
            <person name="Weaver D.D."/>
            <person name="Gibson W.T."/>
        </authorList>
    </citation>
    <scope>VARIANTS WVS CYS-133 AND CYS-679</scope>
    <scope>CHARACTERIZATION OF VARIANTS WVS SER-132; CYS-133; TYR-153 DEL; CYS-679 AND TYR-689</scope>
    <scope>VARIANT HIS-185</scope>
    <scope>CHARACTERIZATION OF VARIANT HIS-185</scope>
    <scope>MUTAGENESIS OF PHE-667</scope>
</reference>
<reference key="68">
    <citation type="journal article" date="2017" name="Hum. Mutat.">
        <title>Mutations in genes encoding polycomb repressive complex 2 subunits cause Weaver syndrome.</title>
        <authorList>
            <person name="Imagawa E."/>
            <person name="Higashimoto K."/>
            <person name="Sakai Y."/>
            <person name="Numakura C."/>
            <person name="Okamoto N."/>
            <person name="Matsunaga S."/>
            <person name="Ryo A."/>
            <person name="Sato Y."/>
            <person name="Sanefuji M."/>
            <person name="Ihara K."/>
            <person name="Takada Y."/>
            <person name="Nishimura G."/>
            <person name="Saitsu H."/>
            <person name="Mizuguchi T."/>
            <person name="Miyatake S."/>
            <person name="Nakashima M."/>
            <person name="Miyake N."/>
            <person name="Soejima H."/>
            <person name="Matsumoto N."/>
        </authorList>
    </citation>
    <scope>INVOLVEMENT IN WVS</scope>
</reference>
<feature type="chain" id="PRO_0000213992" description="Histone-lysine N-methyltransferase EZH2">
    <location>
        <begin position="1"/>
        <end position="746"/>
    </location>
</feature>
<feature type="domain" description="CXC" evidence="4">
    <location>
        <begin position="503"/>
        <end position="605"/>
    </location>
</feature>
<feature type="domain" description="SET" evidence="3">
    <location>
        <begin position="612"/>
        <end position="727"/>
    </location>
</feature>
<feature type="region of interest" description="Interaction with DNMT1, DNMT3A and DNMT3B">
    <location>
        <begin position="1"/>
        <end position="340"/>
    </location>
</feature>
<feature type="region of interest" description="Interaction with EED" evidence="1">
    <location>
        <begin position="39"/>
        <end position="68"/>
    </location>
</feature>
<feature type="region of interest" description="Disordered" evidence="5">
    <location>
        <begin position="180"/>
        <end position="222"/>
    </location>
</feature>
<feature type="region of interest" description="Interaction with CDYL" evidence="32">
    <location>
        <begin position="329"/>
        <end position="522"/>
    </location>
</feature>
<feature type="region of interest" description="Disordered" evidence="5">
    <location>
        <begin position="340"/>
        <end position="426"/>
    </location>
</feature>
<feature type="compositionally biased region" description="Acidic residues" evidence="5">
    <location>
        <begin position="182"/>
        <end position="195"/>
    </location>
</feature>
<feature type="compositionally biased region" description="Basic and acidic residues" evidence="5">
    <location>
        <begin position="196"/>
        <end position="222"/>
    </location>
</feature>
<feature type="compositionally biased region" description="Basic residues" evidence="5">
    <location>
        <begin position="345"/>
        <end position="357"/>
    </location>
</feature>
<feature type="compositionally biased region" description="Basic and acidic residues" evidence="5">
    <location>
        <begin position="374"/>
        <end position="385"/>
    </location>
</feature>
<feature type="modified residue" description="Phosphoserine; by PKB/AKT1" evidence="17">
    <location>
        <position position="21"/>
    </location>
</feature>
<feature type="modified residue" description="Phosphoserine" evidence="66">
    <location>
        <position position="76"/>
    </location>
</feature>
<feature type="modified residue" description="Phosphothreonine" evidence="66">
    <location>
        <position position="339"/>
    </location>
</feature>
<feature type="modified residue" description="Phosphothreonine; by CDK1 and CDK2" evidence="30">
    <location>
        <position position="345"/>
    </location>
</feature>
<feature type="modified residue" description="Phosphoserine" evidence="66">
    <location>
        <position position="363"/>
    </location>
</feature>
<feature type="modified residue" description="Phosphoserine" evidence="61">
    <location>
        <position position="366"/>
    </location>
</feature>
<feature type="modified residue" description="Phosphothreonine" evidence="61 66">
    <location>
        <position position="367"/>
    </location>
</feature>
<feature type="modified residue" description="Phosphothreonine" evidence="58 59 60 61 62 63 64 65 66">
    <location>
        <position position="487"/>
    </location>
</feature>
<feature type="glycosylation site" description="O-linked (GlcNAc) serine" evidence="38">
    <location>
        <position position="75"/>
    </location>
</feature>
<feature type="cross-link" description="Glycyl lysine isopeptide (Lys-Gly) (interchain with G-Cter in SUMO2)" evidence="67">
    <location>
        <position position="634"/>
    </location>
</feature>
<feature type="splice variant" id="VSP_038813" description="In isoform 4 and isoform 5." evidence="50">
    <location>
        <begin position="74"/>
        <end position="82"/>
    </location>
</feature>
<feature type="splice variant" id="VSP_038814" description="In isoform 3." evidence="50">
    <location>
        <begin position="83"/>
        <end position="121"/>
    </location>
</feature>
<feature type="splice variant" id="VSP_038815" description="In isoform 2." evidence="51">
    <original>HP</original>
    <variation>HRKCNYS</variation>
    <location>
        <begin position="297"/>
        <end position="298"/>
    </location>
</feature>
<feature type="splice variant" id="VSP_038816" description="In isoform 5." evidence="50">
    <original>DGSSNHVYNYQPCDHPRQPCDSSCPCVIAQNFCEKFCQCSSEC</original>
    <variation>G</variation>
    <location>
        <begin position="511"/>
        <end position="553"/>
    </location>
</feature>
<feature type="sequence variant" id="VAR_067595" description="In WVS; decreased histone methyltransferase activity; dbSNP:rs193921148." evidence="33 39">
    <original>P</original>
    <variation>S</variation>
    <location>
        <position position="132"/>
    </location>
</feature>
<feature type="sequence variant" id="VAR_078320" description="In WVS; decreased histone methyltransferase activity; dbSNP:rs1808822115." evidence="39">
    <original>Y</original>
    <variation>C</variation>
    <location>
        <position position="133"/>
    </location>
</feature>
<feature type="sequence variant" id="VAR_078321" description="In WVS." evidence="34">
    <original>M</original>
    <variation>T</variation>
    <location>
        <position position="134"/>
    </location>
</feature>
<feature type="sequence variant" id="VAR_067596" description="In WVS; decreased histone methyltransferase activity; dbSNP:rs193921146." evidence="33 39">
    <location>
        <position position="153"/>
    </location>
</feature>
<feature type="sequence variant" id="VAR_078322" description="In WVS." evidence="34">
    <original>K</original>
    <variation>E</variation>
    <location>
        <position position="156"/>
    </location>
</feature>
<feature type="sequence variant" id="VAR_055795" description="Decreased histone methyltransferase activity; dbSNP:rs2302427." evidence="39">
    <original>D</original>
    <variation>H</variation>
    <location>
        <position position="185"/>
    </location>
</feature>
<feature type="sequence variant" id="VAR_078323" description="In WVS." evidence="34">
    <original>H</original>
    <variation>R</variation>
    <location>
        <position position="279"/>
    </location>
</feature>
<feature type="sequence variant" id="VAR_078324" description="Found in a patient with myelodysplastic syndrome and myelodysplastic-myeloproliferative neoplasms; somatic mutation; loss of histone methyltransferase activity." evidence="29">
    <original>C</original>
    <variation>W</variation>
    <location>
        <position position="571"/>
    </location>
</feature>
<feature type="sequence variant" id="VAR_078325" description="In WVS; uncertain significance; dbSNP:rs587783625." evidence="34">
    <original>V</original>
    <variation>M</variation>
    <location>
        <position position="621"/>
    </location>
</feature>
<feature type="sequence variant" id="VAR_067228" description="In a patient with diffuse large B-cell lymphoma; somatic mutation; changed substrate preferences; prefers substrates with greater methylation H3K27me0&lt;me1&lt;me2; dbSNP:rs267601394." evidence="28 29 35">
    <original>Y</original>
    <variation>C</variation>
    <location>
        <position position="641"/>
    </location>
</feature>
<feature type="sequence variant" id="VAR_067229" description="Found in a patient with follicular lymphoma; also in diffuse large B-cell lymphoma; somatic mutation; changed substrate preferences; prefers substrates with greater methylation H3K27me0&lt;me1&lt;me2; dbSNP:rs267601394." evidence="28 35">
    <original>Y</original>
    <variation>F</variation>
    <location>
        <position position="641"/>
    </location>
</feature>
<feature type="sequence variant" id="VAR_067230" description="Found in patients with follicular lymphoma; also in diffuse large B-cell lymphoma; somatic mutation; changed substrate preferences; prefers substrates with greater methylation H3K27me0&lt;me1&lt;me2; dbSNP:rs267601395." evidence="28 35">
    <original>Y</original>
    <variation>H</variation>
    <location>
        <position position="641"/>
    </location>
</feature>
<feature type="sequence variant" id="VAR_067231" description="Found in patients with follicular lymphoma; also in diffuse large B-cell lymphoma; somatic mutation; changed substrate preferences; prefers substrates with greater methylation H3K27me0&lt;me1&lt;me2; dbSNP:rs267601395." evidence="28 35">
    <original>Y</original>
    <variation>N</variation>
    <location>
        <position position="641"/>
    </location>
</feature>
<feature type="sequence variant" id="VAR_067232" description="Found in patients with follicular lymphoma; also in diffuse large B-cell lymphoma; somatic mutation; dbSNP:rs267601394." evidence="28">
    <original>Y</original>
    <variation>S</variation>
    <location>
        <position position="641"/>
    </location>
</feature>
<feature type="sequence variant" id="VAR_078326" description="In WVS." evidence="34">
    <original>Y</original>
    <variation>N</variation>
    <location>
        <position position="658"/>
    </location>
</feature>
<feature type="sequence variant" id="VAR_078327" description="Found in a patient with B-cell lymphoma; increased hypertrimethylation of H3K27; changed substrate preferences; confers biochemical activity independent of H3K27 methylation state; dbSNP:rs1057519833." evidence="35">
    <original>A</original>
    <variation>G</variation>
    <location>
        <position position="677"/>
    </location>
</feature>
<feature type="sequence variant" id="VAR_078328" description="In WVS; dbSNP:rs397515547." evidence="34">
    <original>A</original>
    <variation>T</variation>
    <location>
        <position position="677"/>
    </location>
</feature>
<feature type="sequence variant" id="VAR_078329" description="In WVS; decreased histone methyltransferase activity; dbSNP:rs587783626." evidence="34 39">
    <original>R</original>
    <variation>C</variation>
    <location>
        <position position="679"/>
    </location>
</feature>
<feature type="sequence variant" id="VAR_078330" description="Found in a patient with myeloid disorders; somatic mutation; loss of histone methyltransferase activity; dbSNP:rs2129467676." evidence="29">
    <original>R</original>
    <variation>C</variation>
    <location>
        <position position="685"/>
    </location>
</feature>
<feature type="sequence variant" id="VAR_067233" description="In a patient with chronic myelomonocytic leukemia; dbSNP:rs1554481435." evidence="31">
    <original>R</original>
    <variation>H</variation>
    <location>
        <position position="685"/>
    </location>
</feature>
<feature type="sequence variant" id="VAR_067597" description="In WVS; decreased histone methyltransferase activity; dbSNP:rs193921147." evidence="33 39">
    <original>H</original>
    <variation>Y</variation>
    <location>
        <position position="689"/>
    </location>
</feature>
<feature type="sequence variant" id="VAR_078331" description="In WVS; dbSNP:rs2129467664." evidence="34">
    <original>S</original>
    <variation>L</variation>
    <location>
        <position position="690"/>
    </location>
</feature>
<feature type="sequence variant" id="VAR_078332" description="Found in a patient with chronic myelomonocytic leukemia; somatic mutation; loss of histone methyltransferase activity." evidence="29">
    <original>Y</original>
    <variation>D</variation>
    <location>
        <position position="726"/>
    </location>
</feature>
<feature type="sequence variant" id="VAR_078333" description="In WVS." evidence="34">
    <location>
        <begin position="728"/>
        <end position="746"/>
    </location>
</feature>
<feature type="sequence variant" id="VAR_078334" description="In WVS." evidence="34">
    <original>Y</original>
    <variation>C</variation>
    <location>
        <position position="736"/>
    </location>
</feature>
<feature type="sequence variant" id="VAR_078335" description="In WVS; uncertain significance; dbSNP:rs397515548." evidence="37">
    <original>E</original>
    <variation>K</variation>
    <location>
        <position position="740"/>
    </location>
</feature>
<feature type="mutagenesis site" description="Enhances methyltransferase activity towards 'Lys-27' of histone H3 and abrogates phosphorylation by PKB/AKT1." evidence="17">
    <original>S</original>
    <variation>A</variation>
    <location>
        <position position="21"/>
    </location>
</feature>
<feature type="mutagenesis site" description="Reduces methyltransferase activity towards 'Lys-27' of histone H3 and abrogates phosphorylation by PKB/AKT1." evidence="17">
    <original>S</original>
    <variation>D</variation>
    <location>
        <position position="21"/>
    </location>
</feature>
<feature type="mutagenesis site" description="Reduced protein stability." evidence="38">
    <original>S</original>
    <variation>A</variation>
    <location>
        <position position="75"/>
    </location>
</feature>
<feature type="mutagenesis site" description="Impaired CDK1- and CDK-2 mediated phosphorylation and subsequent gene silencing. Altered EZH2-mediated cell proliferation and migration." evidence="30">
    <original>T</original>
    <variation>A</variation>
    <location>
        <position position="345"/>
    </location>
</feature>
<feature type="mutagenesis site" description="Strongly impairs methyltransferase activity towards 'Lys-27' of histone H3." evidence="10">
    <original>C</original>
    <variation>Y</variation>
    <location>
        <position position="588"/>
    </location>
</feature>
<feature type="mutagenesis site" description="Strongly decreases histone methyltransferase activity." evidence="39">
    <original>F</original>
    <variation>I</variation>
    <location>
        <position position="667"/>
    </location>
</feature>
<feature type="mutagenesis site" description="Abrogates methyltransferase activity." evidence="10 25">
    <original>H</original>
    <variation>A</variation>
    <location>
        <position position="689"/>
    </location>
</feature>
<feature type="sequence conflict" description="In Ref. 3; BAG52592." evidence="53" ref="3">
    <original>K</original>
    <variation>N</variation>
    <location>
        <position position="39"/>
    </location>
</feature>
<feature type="sequence conflict" description="In Ref. 1; CAA64955." evidence="53" ref="1">
    <original>F</original>
    <variation>L</variation>
    <location>
        <position position="224"/>
    </location>
</feature>
<feature type="sequence conflict" description="In Ref. 1; CAA64955." evidence="53" ref="1">
    <original>F</original>
    <variation>V</variation>
    <location>
        <position position="724"/>
    </location>
</feature>
<feature type="helix" evidence="72">
    <location>
        <begin position="44"/>
        <end position="62"/>
    </location>
</feature>
<feature type="strand" evidence="74">
    <location>
        <begin position="82"/>
        <end position="91"/>
    </location>
</feature>
<feature type="strand" evidence="74">
    <location>
        <begin position="94"/>
        <end position="97"/>
    </location>
</feature>
<feature type="strand" evidence="74">
    <location>
        <begin position="99"/>
        <end position="101"/>
    </location>
</feature>
<feature type="strand" evidence="69">
    <location>
        <begin position="126"/>
        <end position="129"/>
    </location>
</feature>
<feature type="helix" evidence="69">
    <location>
        <begin position="135"/>
        <end position="138"/>
    </location>
</feature>
<feature type="turn" evidence="69">
    <location>
        <begin position="139"/>
        <end position="143"/>
    </location>
</feature>
<feature type="helix" evidence="74">
    <location>
        <begin position="144"/>
        <end position="151"/>
    </location>
</feature>
<feature type="turn" evidence="69">
    <location>
        <begin position="153"/>
        <end position="155"/>
    </location>
</feature>
<feature type="strand" evidence="71">
    <location>
        <begin position="161"/>
        <end position="163"/>
    </location>
</feature>
<feature type="helix" evidence="74">
    <location>
        <begin position="168"/>
        <end position="179"/>
    </location>
</feature>
<feature type="helix" evidence="74">
    <location>
        <begin position="222"/>
        <end position="230"/>
    </location>
</feature>
<feature type="helix" evidence="74">
    <location>
        <begin position="232"/>
        <end position="234"/>
    </location>
</feature>
<feature type="helix" evidence="74">
    <location>
        <begin position="239"/>
        <end position="248"/>
    </location>
</feature>
<feature type="strand" evidence="76">
    <location>
        <begin position="264"/>
        <end position="267"/>
    </location>
</feature>
<feature type="helix" evidence="69">
    <location>
        <begin position="274"/>
        <end position="284"/>
    </location>
</feature>
<feature type="turn" evidence="69">
    <location>
        <begin position="287"/>
        <end position="289"/>
    </location>
</feature>
<feature type="strand" evidence="69">
    <location>
        <begin position="291"/>
        <end position="293"/>
    </location>
</feature>
<feature type="helix" evidence="76">
    <location>
        <begin position="299"/>
        <end position="301"/>
    </location>
</feature>
<feature type="turn" evidence="69">
    <location>
        <begin position="304"/>
        <end position="306"/>
    </location>
</feature>
<feature type="strand" evidence="76">
    <location>
        <begin position="320"/>
        <end position="322"/>
    </location>
</feature>
<feature type="turn" evidence="76">
    <location>
        <begin position="325"/>
        <end position="327"/>
    </location>
</feature>
<feature type="helix" evidence="69">
    <location>
        <begin position="332"/>
        <end position="343"/>
    </location>
</feature>
<feature type="helix" evidence="69">
    <location>
        <begin position="434"/>
        <end position="447"/>
    </location>
</feature>
<feature type="helix" evidence="69">
    <location>
        <begin position="451"/>
        <end position="458"/>
    </location>
</feature>
<feature type="helix" evidence="69">
    <location>
        <begin position="463"/>
        <end position="474"/>
    </location>
</feature>
<feature type="helix" evidence="75">
    <location>
        <begin position="492"/>
        <end position="495"/>
    </location>
</feature>
<feature type="helix" evidence="75">
    <location>
        <begin position="497"/>
        <end position="510"/>
    </location>
</feature>
<feature type="helix" evidence="75">
    <location>
        <begin position="511"/>
        <end position="513"/>
    </location>
</feature>
<feature type="strand" evidence="69">
    <location>
        <begin position="526"/>
        <end position="528"/>
    </location>
</feature>
<feature type="strand" evidence="76">
    <location>
        <begin position="530"/>
        <end position="534"/>
    </location>
</feature>
<feature type="helix" evidence="68">
    <location>
        <begin position="535"/>
        <end position="538"/>
    </location>
</feature>
<feature type="strand" evidence="76">
    <location>
        <begin position="545"/>
        <end position="547"/>
    </location>
</feature>
<feature type="strand" evidence="68">
    <location>
        <begin position="563"/>
        <end position="565"/>
    </location>
</feature>
<feature type="strand" evidence="73">
    <location>
        <begin position="568"/>
        <end position="571"/>
    </location>
</feature>
<feature type="helix" evidence="68">
    <location>
        <begin position="572"/>
        <end position="575"/>
    </location>
</feature>
<feature type="turn" evidence="68">
    <location>
        <begin position="582"/>
        <end position="584"/>
    </location>
</feature>
<feature type="strand" evidence="68">
    <location>
        <begin position="587"/>
        <end position="589"/>
    </location>
</feature>
<feature type="strand" evidence="71">
    <location>
        <begin position="590"/>
        <end position="592"/>
    </location>
</feature>
<feature type="strand" evidence="69">
    <location>
        <begin position="594"/>
        <end position="596"/>
    </location>
</feature>
<feature type="strand" evidence="68">
    <location>
        <begin position="600"/>
        <end position="603"/>
    </location>
</feature>
<feature type="helix" evidence="68">
    <location>
        <begin position="605"/>
        <end position="608"/>
    </location>
</feature>
<feature type="strand" evidence="68">
    <location>
        <begin position="614"/>
        <end position="618"/>
    </location>
</feature>
<feature type="strand" evidence="68">
    <location>
        <begin position="620"/>
        <end position="630"/>
    </location>
</feature>
<feature type="strand" evidence="68">
    <location>
        <begin position="637"/>
        <end position="640"/>
    </location>
</feature>
<feature type="strand" evidence="68">
    <location>
        <begin position="643"/>
        <end position="647"/>
    </location>
</feature>
<feature type="helix" evidence="68">
    <location>
        <begin position="648"/>
        <end position="656"/>
    </location>
</feature>
<feature type="turn" evidence="76">
    <location>
        <begin position="659"/>
        <end position="662"/>
    </location>
</feature>
<feature type="strand" evidence="68">
    <location>
        <begin position="666"/>
        <end position="668"/>
    </location>
</feature>
<feature type="strand" evidence="68">
    <location>
        <begin position="670"/>
        <end position="676"/>
    </location>
</feature>
<feature type="turn" evidence="68">
    <location>
        <begin position="678"/>
        <end position="680"/>
    </location>
</feature>
<feature type="helix" evidence="68">
    <location>
        <begin position="683"/>
        <end position="686"/>
    </location>
</feature>
<feature type="strand" evidence="68">
    <location>
        <begin position="687"/>
        <end position="689"/>
    </location>
</feature>
<feature type="strand" evidence="68">
    <location>
        <begin position="694"/>
        <end position="702"/>
    </location>
</feature>
<feature type="strand" evidence="68">
    <location>
        <begin position="705"/>
        <end position="714"/>
    </location>
</feature>
<feature type="strand" evidence="71">
    <location>
        <begin position="721"/>
        <end position="723"/>
    </location>
</feature>
<feature type="helix" evidence="70">
    <location>
        <begin position="726"/>
        <end position="729"/>
    </location>
</feature>
<feature type="helix" evidence="76">
    <location>
        <begin position="733"/>
        <end position="736"/>
    </location>
</feature>
<name>EZH2_HUMAN</name>
<accession>Q15910</accession>
<accession>B2RAQ1</accession>
<accession>B3KS30</accession>
<accession>B7Z1D6</accession>
<accession>B7Z7L6</accession>
<accession>Q15755</accession>
<accession>Q75MG3</accession>
<accession>Q92857</accession>
<accession>Q96FI6</accession>
<organism>
    <name type="scientific">Homo sapiens</name>
    <name type="common">Human</name>
    <dbReference type="NCBI Taxonomy" id="9606"/>
    <lineage>
        <taxon>Eukaryota</taxon>
        <taxon>Metazoa</taxon>
        <taxon>Chordata</taxon>
        <taxon>Craniata</taxon>
        <taxon>Vertebrata</taxon>
        <taxon>Euteleostomi</taxon>
        <taxon>Mammalia</taxon>
        <taxon>Eutheria</taxon>
        <taxon>Euarchontoglires</taxon>
        <taxon>Primates</taxon>
        <taxon>Haplorrhini</taxon>
        <taxon>Catarrhini</taxon>
        <taxon>Hominidae</taxon>
        <taxon>Homo</taxon>
    </lineage>
</organism>
<dbReference type="EC" id="2.1.1.356" evidence="35"/>
<dbReference type="EMBL" id="X95653">
    <property type="protein sequence ID" value="CAA64955.1"/>
    <property type="molecule type" value="mRNA"/>
</dbReference>
<dbReference type="EMBL" id="U61145">
    <property type="protein sequence ID" value="AAC51520.1"/>
    <property type="molecule type" value="mRNA"/>
</dbReference>
<dbReference type="EMBL" id="AK302216">
    <property type="protein sequence ID" value="BAH13652.1"/>
    <property type="molecule type" value="mRNA"/>
</dbReference>
<dbReference type="EMBL" id="AK092676">
    <property type="protein sequence ID" value="BAG52592.1"/>
    <property type="molecule type" value="mRNA"/>
</dbReference>
<dbReference type="EMBL" id="AK293239">
    <property type="protein sequence ID" value="BAH11472.1"/>
    <property type="molecule type" value="mRNA"/>
</dbReference>
<dbReference type="EMBL" id="AK314291">
    <property type="protein sequence ID" value="BAG36948.1"/>
    <property type="molecule type" value="mRNA"/>
</dbReference>
<dbReference type="EMBL" id="AC006323">
    <property type="status" value="NOT_ANNOTATED_CDS"/>
    <property type="molecule type" value="Genomic_DNA"/>
</dbReference>
<dbReference type="EMBL" id="AC073140">
    <property type="protein sequence ID" value="AAS07448.1"/>
    <property type="status" value="ALT_SEQ"/>
    <property type="molecule type" value="Genomic_DNA"/>
</dbReference>
<dbReference type="EMBL" id="CH471146">
    <property type="protein sequence ID" value="EAW80067.1"/>
    <property type="molecule type" value="Genomic_DNA"/>
</dbReference>
<dbReference type="EMBL" id="CH471146">
    <property type="protein sequence ID" value="EAW80070.1"/>
    <property type="molecule type" value="Genomic_DNA"/>
</dbReference>
<dbReference type="EMBL" id="BC010858">
    <property type="protein sequence ID" value="AAH10858.1"/>
    <property type="molecule type" value="mRNA"/>
</dbReference>
<dbReference type="EMBL" id="U52965">
    <property type="protein sequence ID" value="AAC50591.1"/>
    <property type="molecule type" value="Genomic_DNA"/>
</dbReference>
<dbReference type="CCDS" id="CCDS56516.1">
    <molecule id="Q15910-1"/>
</dbReference>
<dbReference type="CCDS" id="CCDS56517.1">
    <molecule id="Q15910-5"/>
</dbReference>
<dbReference type="CCDS" id="CCDS56518.1">
    <molecule id="Q15910-4"/>
</dbReference>
<dbReference type="CCDS" id="CCDS5891.1">
    <molecule id="Q15910-2"/>
</dbReference>
<dbReference type="CCDS" id="CCDS5892.1">
    <molecule id="Q15910-3"/>
</dbReference>
<dbReference type="PIR" id="G02838">
    <property type="entry name" value="G02838"/>
</dbReference>
<dbReference type="RefSeq" id="NP_001190176.1">
    <molecule id="Q15910-1"/>
    <property type="nucleotide sequence ID" value="NM_001203247.2"/>
</dbReference>
<dbReference type="RefSeq" id="NP_001190177.1">
    <molecule id="Q15910-4"/>
    <property type="nucleotide sequence ID" value="NM_001203248.2"/>
</dbReference>
<dbReference type="RefSeq" id="NP_001190178.1">
    <molecule id="Q15910-5"/>
    <property type="nucleotide sequence ID" value="NM_001203249.2"/>
</dbReference>
<dbReference type="RefSeq" id="NP_004447.2">
    <molecule id="Q15910-2"/>
    <property type="nucleotide sequence ID" value="NM_004456.4"/>
</dbReference>
<dbReference type="RefSeq" id="NP_694543.1">
    <molecule id="Q15910-3"/>
    <property type="nucleotide sequence ID" value="NM_152998.3"/>
</dbReference>
<dbReference type="RefSeq" id="XP_011514186.1">
    <property type="nucleotide sequence ID" value="XM_011515884.2"/>
</dbReference>
<dbReference type="RefSeq" id="XP_047275947.1">
    <molecule id="Q15910-2"/>
    <property type="nucleotide sequence ID" value="XM_047419991.1"/>
</dbReference>
<dbReference type="RefSeq" id="XP_047275948.1">
    <molecule id="Q15910-1"/>
    <property type="nucleotide sequence ID" value="XM_047419992.1"/>
</dbReference>
<dbReference type="RefSeq" id="XP_047275953.1">
    <molecule id="Q15910-4"/>
    <property type="nucleotide sequence ID" value="XM_047419997.1"/>
</dbReference>
<dbReference type="RefSeq" id="XP_054213461.1">
    <molecule id="Q15910-1"/>
    <property type="nucleotide sequence ID" value="XM_054357486.1"/>
</dbReference>
<dbReference type="RefSeq" id="XP_054213468.1">
    <molecule id="Q15910-4"/>
    <property type="nucleotide sequence ID" value="XM_054357493.1"/>
</dbReference>
<dbReference type="PDB" id="4MI0">
    <property type="method" value="X-ray"/>
    <property type="resolution" value="2.00 A"/>
    <property type="chains" value="A=520-746"/>
</dbReference>
<dbReference type="PDB" id="4MI5">
    <property type="method" value="X-ray"/>
    <property type="resolution" value="2.00 A"/>
    <property type="chains" value="A=521-746"/>
</dbReference>
<dbReference type="PDB" id="5GSA">
    <property type="method" value="X-ray"/>
    <property type="resolution" value="2.49 A"/>
    <property type="chains" value="C/D=40-68"/>
</dbReference>
<dbReference type="PDB" id="5H14">
    <property type="method" value="X-ray"/>
    <property type="resolution" value="1.90 A"/>
    <property type="chains" value="C/D=40-68"/>
</dbReference>
<dbReference type="PDB" id="5H15">
    <property type="method" value="X-ray"/>
    <property type="resolution" value="2.27 A"/>
    <property type="chains" value="C/D=40-68"/>
</dbReference>
<dbReference type="PDB" id="5H17">
    <property type="method" value="X-ray"/>
    <property type="resolution" value="2.30 A"/>
    <property type="chains" value="B=40-68"/>
</dbReference>
<dbReference type="PDB" id="5H19">
    <property type="method" value="X-ray"/>
    <property type="resolution" value="1.90 A"/>
    <property type="chains" value="B=40-68"/>
</dbReference>
<dbReference type="PDB" id="5H24">
    <property type="method" value="X-ray"/>
    <property type="resolution" value="2.50 A"/>
    <property type="chains" value="C/D=40-68"/>
</dbReference>
<dbReference type="PDB" id="5H25">
    <property type="method" value="X-ray"/>
    <property type="resolution" value="2.88 A"/>
    <property type="chains" value="C/D=40-68"/>
</dbReference>
<dbReference type="PDB" id="5HYN">
    <property type="method" value="X-ray"/>
    <property type="resolution" value="2.95 A"/>
    <property type="chains" value="A/F/K/Q=1-746"/>
</dbReference>
<dbReference type="PDB" id="5IJ7">
    <property type="method" value="X-ray"/>
    <property type="resolution" value="2.62 A"/>
    <property type="chains" value="A/B=429-487, A/B=511-746"/>
</dbReference>
<dbReference type="PDB" id="5IJ8">
    <property type="method" value="X-ray"/>
    <property type="resolution" value="2.99 A"/>
    <property type="chains" value="A/B=429-487, A/B=511-531, A/B=533-746"/>
</dbReference>
<dbReference type="PDB" id="5LS6">
    <property type="method" value="X-ray"/>
    <property type="resolution" value="3.47 A"/>
    <property type="chains" value="A/D/G/J=1-385, A/D/G/J=421-746"/>
</dbReference>
<dbReference type="PDB" id="5U5T">
    <property type="method" value="X-ray"/>
    <property type="resolution" value="1.60 A"/>
    <property type="chains" value="C/D=39-68"/>
</dbReference>
<dbReference type="PDB" id="5U62">
    <property type="method" value="X-ray"/>
    <property type="resolution" value="1.90 A"/>
    <property type="chains" value="C/D=39-68"/>
</dbReference>
<dbReference type="PDB" id="5WG6">
    <property type="method" value="X-ray"/>
    <property type="resolution" value="3.90 A"/>
    <property type="chains" value="A/C=2-746"/>
</dbReference>
<dbReference type="PDB" id="5WUK">
    <property type="method" value="X-ray"/>
    <property type="resolution" value="2.03 A"/>
    <property type="chains" value="B=41-68"/>
</dbReference>
<dbReference type="PDB" id="6C23">
    <property type="method" value="EM"/>
    <property type="resolution" value="3.90 A"/>
    <property type="chains" value="C/K=1-746"/>
</dbReference>
<dbReference type="PDB" id="6C24">
    <property type="method" value="EM"/>
    <property type="resolution" value="3.50 A"/>
    <property type="chains" value="C/K=1-746"/>
</dbReference>
<dbReference type="PDB" id="6LO2">
    <property type="method" value="X-ray"/>
    <property type="resolution" value="2.21 A"/>
    <property type="chains" value="C/D=40-68"/>
</dbReference>
<dbReference type="PDB" id="6P5L">
    <property type="method" value="X-ray"/>
    <property type="resolution" value="3.30 A"/>
    <property type="chains" value="D=489-496"/>
</dbReference>
<dbReference type="PDB" id="6U4Y">
    <property type="method" value="X-ray"/>
    <property type="resolution" value="2.91 A"/>
    <property type="chains" value="A/B/C=2-182, A/B/C=220-257"/>
</dbReference>
<dbReference type="PDB" id="6WKR">
    <property type="method" value="EM"/>
    <property type="resolution" value="3.50 A"/>
    <property type="chains" value="C=1-746"/>
</dbReference>
<dbReference type="PDB" id="7AT8">
    <property type="method" value="EM"/>
    <property type="resolution" value="4.40 A"/>
    <property type="chains" value="A=1-746"/>
</dbReference>
<dbReference type="PDB" id="7QJG">
    <property type="method" value="X-ray"/>
    <property type="resolution" value="1.80 A"/>
    <property type="chains" value="C/D=40-68"/>
</dbReference>
<dbReference type="PDB" id="7QJU">
    <property type="method" value="X-ray"/>
    <property type="resolution" value="1.80 A"/>
    <property type="chains" value="C/D=40-68"/>
</dbReference>
<dbReference type="PDB" id="7QK4">
    <property type="method" value="X-ray"/>
    <property type="resolution" value="1.60 A"/>
    <property type="chains" value="B=40-68"/>
</dbReference>
<dbReference type="PDB" id="8EQV">
    <property type="method" value="EM"/>
    <property type="resolution" value="3.64 A"/>
    <property type="chains" value="D=1-746"/>
</dbReference>
<dbReference type="PDB" id="8FYH">
    <property type="method" value="EM"/>
    <property type="resolution" value="3.40 A"/>
    <property type="chains" value="A/G=1-746"/>
</dbReference>
<dbReference type="PDB" id="8T9G">
    <property type="method" value="EM"/>
    <property type="resolution" value="6.20 A"/>
    <property type="chains" value="C/I=2-746"/>
</dbReference>
<dbReference type="PDB" id="8TAS">
    <property type="method" value="EM"/>
    <property type="resolution" value="4.10 A"/>
    <property type="chains" value="E=2-746"/>
</dbReference>
<dbReference type="PDB" id="8TB9">
    <property type="method" value="EM"/>
    <property type="resolution" value="4.00 A"/>
    <property type="chains" value="E=2-746"/>
</dbReference>
<dbReference type="PDB" id="8VMI">
    <property type="method" value="EM"/>
    <property type="resolution" value="3.10 A"/>
    <property type="chains" value="C=1-746"/>
</dbReference>
<dbReference type="PDB" id="8VML">
    <property type="method" value="EM"/>
    <property type="resolution" value="3.50 A"/>
    <property type="chains" value="C=1-746"/>
</dbReference>
<dbReference type="PDB" id="8VNV">
    <property type="method" value="EM"/>
    <property type="resolution" value="3.10 A"/>
    <property type="chains" value="C=1-746"/>
</dbReference>
<dbReference type="PDB" id="8VNZ">
    <property type="method" value="EM"/>
    <property type="resolution" value="3.50 A"/>
    <property type="chains" value="C=1-746"/>
</dbReference>
<dbReference type="PDB" id="9C8U">
    <property type="method" value="EM"/>
    <property type="resolution" value="3.10 A"/>
    <property type="chains" value="A=2-746"/>
</dbReference>
<dbReference type="PDB" id="9DCH">
    <property type="method" value="EM"/>
    <property type="resolution" value="3.40 A"/>
    <property type="chains" value="A/H=2-746"/>
</dbReference>
<dbReference type="PDBsum" id="4MI0"/>
<dbReference type="PDBsum" id="4MI5"/>
<dbReference type="PDBsum" id="5GSA"/>
<dbReference type="PDBsum" id="5H14"/>
<dbReference type="PDBsum" id="5H15"/>
<dbReference type="PDBsum" id="5H17"/>
<dbReference type="PDBsum" id="5H19"/>
<dbReference type="PDBsum" id="5H24"/>
<dbReference type="PDBsum" id="5H25"/>
<dbReference type="PDBsum" id="5HYN"/>
<dbReference type="PDBsum" id="5IJ7"/>
<dbReference type="PDBsum" id="5IJ8"/>
<dbReference type="PDBsum" id="5LS6"/>
<dbReference type="PDBsum" id="5U5T"/>
<dbReference type="PDBsum" id="5U62"/>
<dbReference type="PDBsum" id="5WG6"/>
<dbReference type="PDBsum" id="5WUK"/>
<dbReference type="PDBsum" id="6C23"/>
<dbReference type="PDBsum" id="6C24"/>
<dbReference type="PDBsum" id="6LO2"/>
<dbReference type="PDBsum" id="6P5L"/>
<dbReference type="PDBsum" id="6U4Y"/>
<dbReference type="PDBsum" id="6WKR"/>
<dbReference type="PDBsum" id="7AT8"/>
<dbReference type="PDBsum" id="7QJG"/>
<dbReference type="PDBsum" id="7QJU"/>
<dbReference type="PDBsum" id="7QK4"/>
<dbReference type="PDBsum" id="8EQV"/>
<dbReference type="PDBsum" id="8FYH"/>
<dbReference type="PDBsum" id="8T9G"/>
<dbReference type="PDBsum" id="8TAS"/>
<dbReference type="PDBsum" id="8TB9"/>
<dbReference type="PDBsum" id="8VMI"/>
<dbReference type="PDBsum" id="8VML"/>
<dbReference type="PDBsum" id="8VNV"/>
<dbReference type="PDBsum" id="8VNZ"/>
<dbReference type="PDBsum" id="9C8U"/>
<dbReference type="PDBsum" id="9DCH"/>
<dbReference type="EMDB" id="EMD-21707"/>
<dbReference type="EMDB" id="EMD-28547"/>
<dbReference type="EMDB" id="EMD-29578"/>
<dbReference type="EMDB" id="EMD-41110"/>
<dbReference type="EMDB" id="EMD-41141"/>
<dbReference type="EMDB" id="EMD-41146"/>
<dbReference type="EMDB" id="EMD-43357"/>
<dbReference type="EMDB" id="EMD-43359"/>
<dbReference type="EMDB" id="EMD-43361"/>
<dbReference type="EMDB" id="EMD-43362"/>
<dbReference type="EMDB" id="EMD-46751"/>
<dbReference type="EMDB" id="EMD-7334"/>
<dbReference type="EMDB" id="EMD-7335"/>
<dbReference type="SMR" id="Q15910"/>
<dbReference type="BioGRID" id="108446">
    <property type="interactions" value="1501"/>
</dbReference>
<dbReference type="ComplexPortal" id="CPX-2198">
    <property type="entry name" value="Polycomb repressive complex 2.1,EZH2-RBBP4-PCL3-PALI1 variant"/>
</dbReference>
<dbReference type="ComplexPortal" id="CPX-2204">
    <property type="entry name" value="Polycomb repressive complex 2.1, EZH2-RBBP4-PCL1-PALI1 variant"/>
</dbReference>
<dbReference type="ComplexPortal" id="CPX-2209">
    <property type="entry name" value="Polycomb repressive complex 2.2, EZH2-RBBP4 variant"/>
</dbReference>
<dbReference type="ComplexPortal" id="CPX-2213">
    <property type="entry name" value="Polycomb repressive complex 2.2, EZH2-RBBP7 variant"/>
</dbReference>
<dbReference type="ComplexPortal" id="CPX-2311">
    <property type="entry name" value="Polycomb repressive complex 2.1, EZH2-RBBP7-PCL1-PALI1 variant"/>
</dbReference>
<dbReference type="ComplexPortal" id="CPX-2312">
    <property type="entry name" value="Polycomb repressive complex 2.1, EZH2-RBBP4-PCL2-PALI1 variant"/>
</dbReference>
<dbReference type="ComplexPortal" id="CPX-2314">
    <property type="entry name" value="Polycomb repressive complex 2.1,EZH2-RBBP7-PCL2-PALI1 variant"/>
</dbReference>
<dbReference type="ComplexPortal" id="CPX-2316">
    <property type="entry name" value="Polycomb repressive complex 2.1,EZH2-RBBP7-PCL3-PALI1 variant"/>
</dbReference>
<dbReference type="ComplexPortal" id="CPX-2324">
    <property type="entry name" value="Polycomb repressive complex 2.1, EZH2-RBBP4-PCL1-EPOP variant"/>
</dbReference>
<dbReference type="ComplexPortal" id="CPX-2325">
    <property type="entry name" value="Polycomb repressive complex 2.1, EZH2-RBBP7-PCL1-EPOP variant"/>
</dbReference>
<dbReference type="ComplexPortal" id="CPX-2326">
    <property type="entry name" value="Polycomb repressive complex 2.1, EZH2-RBBP4-PCL2-EPOP variant"/>
</dbReference>
<dbReference type="ComplexPortal" id="CPX-2327">
    <property type="entry name" value="Polycomb repressive complex 2.1, EZH2-RBBP7-PCL2-EPOP variant"/>
</dbReference>
<dbReference type="ComplexPortal" id="CPX-2328">
    <property type="entry name" value="Polycomb repressive complex 2.1, EZH2-RBBP4-PCL3-EPOP variant"/>
</dbReference>
<dbReference type="ComplexPortal" id="CPX-2329">
    <property type="entry name" value="Polycomb repressive complex 2.1, EZH2-RBBP7-PCL3-EPOP variant"/>
</dbReference>
<dbReference type="CORUM" id="Q15910"/>
<dbReference type="DIP" id="DIP-34002N"/>
<dbReference type="FunCoup" id="Q15910">
    <property type="interactions" value="2988"/>
</dbReference>
<dbReference type="IntAct" id="Q15910">
    <property type="interactions" value="144"/>
</dbReference>
<dbReference type="MINT" id="Q15910"/>
<dbReference type="STRING" id="9606.ENSP00000320147"/>
<dbReference type="BindingDB" id="Q15910"/>
<dbReference type="ChEMBL" id="CHEMBL2189110"/>
<dbReference type="DrugBank" id="DB14581">
    <property type="generic name" value="CPI-1205"/>
</dbReference>
<dbReference type="DrugBank" id="DB14799">
    <property type="generic name" value="PF-06821497"/>
</dbReference>
<dbReference type="DrugBank" id="DB12887">
    <property type="generic name" value="Tazemetostat"/>
</dbReference>
<dbReference type="DrugCentral" id="Q15910"/>
<dbReference type="GuidetoPHARMACOLOGY" id="2654"/>
<dbReference type="GlyCosmos" id="Q15910">
    <property type="glycosylation" value="6 sites, 1 glycan"/>
</dbReference>
<dbReference type="GlyGen" id="Q15910">
    <property type="glycosylation" value="7 sites, 1 O-linked glycan (7 sites)"/>
</dbReference>
<dbReference type="iPTMnet" id="Q15910"/>
<dbReference type="PhosphoSitePlus" id="Q15910"/>
<dbReference type="SwissPalm" id="Q15910"/>
<dbReference type="BioMuta" id="EZH2"/>
<dbReference type="DMDM" id="3334180"/>
<dbReference type="jPOST" id="Q15910"/>
<dbReference type="MassIVE" id="Q15910"/>
<dbReference type="PaxDb" id="9606-ENSP00000320147"/>
<dbReference type="PeptideAtlas" id="Q15910"/>
<dbReference type="ProteomicsDB" id="60809">
    <molecule id="Q15910-1"/>
</dbReference>
<dbReference type="ProteomicsDB" id="60810">
    <molecule id="Q15910-2"/>
</dbReference>
<dbReference type="ProteomicsDB" id="60811">
    <molecule id="Q15910-3"/>
</dbReference>
<dbReference type="ProteomicsDB" id="60812">
    <molecule id="Q15910-4"/>
</dbReference>
<dbReference type="ProteomicsDB" id="60813">
    <molecule id="Q15910-5"/>
</dbReference>
<dbReference type="Pumba" id="Q15910"/>
<dbReference type="Antibodypedia" id="32761">
    <property type="antibodies" value="931 antibodies from 45 providers"/>
</dbReference>
<dbReference type="DNASU" id="2146"/>
<dbReference type="Ensembl" id="ENST00000320356.7">
    <molecule id="Q15910-2"/>
    <property type="protein sequence ID" value="ENSP00000320147.2"/>
    <property type="gene ID" value="ENSG00000106462.12"/>
</dbReference>
<dbReference type="Ensembl" id="ENST00000350995.6">
    <molecule id="Q15910-3"/>
    <property type="protein sequence ID" value="ENSP00000223193.2"/>
    <property type="gene ID" value="ENSG00000106462.12"/>
</dbReference>
<dbReference type="Ensembl" id="ENST00000460911.5">
    <molecule id="Q15910-1"/>
    <property type="protein sequence ID" value="ENSP00000419711.1"/>
    <property type="gene ID" value="ENSG00000106462.12"/>
</dbReference>
<dbReference type="Ensembl" id="ENST00000476773.5">
    <molecule id="Q15910-5"/>
    <property type="protein sequence ID" value="ENSP00000419050.1"/>
    <property type="gene ID" value="ENSG00000106462.12"/>
</dbReference>
<dbReference type="Ensembl" id="ENST00000478654.5">
    <molecule id="Q15910-5"/>
    <property type="protein sequence ID" value="ENSP00000417062.1"/>
    <property type="gene ID" value="ENSG00000106462.12"/>
</dbReference>
<dbReference type="Ensembl" id="ENST00000483967.5">
    <molecule id="Q15910-4"/>
    <property type="protein sequence ID" value="ENSP00000419856.1"/>
    <property type="gene ID" value="ENSG00000106462.12"/>
</dbReference>
<dbReference type="GeneID" id="2146"/>
<dbReference type="KEGG" id="hsa:2146"/>
<dbReference type="MANE-Select" id="ENST00000320356.7">
    <molecule id="Q15910-2"/>
    <property type="protein sequence ID" value="ENSP00000320147.2"/>
    <property type="RefSeq nucleotide sequence ID" value="NM_004456.5"/>
    <property type="RefSeq protein sequence ID" value="NP_004447.2"/>
</dbReference>
<dbReference type="UCSC" id="uc003wfb.3">
    <molecule id="Q15910-1"/>
    <property type="organism name" value="human"/>
</dbReference>
<dbReference type="AGR" id="HGNC:3527"/>
<dbReference type="CTD" id="2146"/>
<dbReference type="DisGeNET" id="2146"/>
<dbReference type="GeneCards" id="EZH2"/>
<dbReference type="GeneReviews" id="EZH2"/>
<dbReference type="HGNC" id="HGNC:3527">
    <property type="gene designation" value="EZH2"/>
</dbReference>
<dbReference type="HPA" id="ENSG00000106462">
    <property type="expression patterns" value="Tissue enhanced (bone marrow, lymphoid tissue, testis)"/>
</dbReference>
<dbReference type="MalaCards" id="EZH2"/>
<dbReference type="MIM" id="277590">
    <property type="type" value="phenotype"/>
</dbReference>
<dbReference type="MIM" id="601573">
    <property type="type" value="gene"/>
</dbReference>
<dbReference type="neXtProt" id="NX_Q15910"/>
<dbReference type="OpenTargets" id="ENSG00000106462"/>
<dbReference type="Orphanet" id="3447">
    <property type="disease" value="Weaver syndrome"/>
</dbReference>
<dbReference type="PharmGKB" id="PA27939"/>
<dbReference type="VEuPathDB" id="HostDB:ENSG00000106462"/>
<dbReference type="eggNOG" id="KOG1079">
    <property type="taxonomic scope" value="Eukaryota"/>
</dbReference>
<dbReference type="GeneTree" id="ENSGT00940000155013"/>
<dbReference type="HOGENOM" id="CLU_011342_0_0_1"/>
<dbReference type="InParanoid" id="Q15910"/>
<dbReference type="OMA" id="GNSCYML"/>
<dbReference type="OrthoDB" id="6141102at2759"/>
<dbReference type="PAN-GO" id="Q15910">
    <property type="GO annotations" value="6 GO annotations based on evolutionary models"/>
</dbReference>
<dbReference type="PhylomeDB" id="Q15910"/>
<dbReference type="TreeFam" id="TF314509"/>
<dbReference type="BioCyc" id="MetaCyc:HS02911-MONOMER"/>
<dbReference type="BRENDA" id="2.1.1.356">
    <property type="organism ID" value="2681"/>
</dbReference>
<dbReference type="PathwayCommons" id="Q15910"/>
<dbReference type="Reactome" id="R-HSA-212300">
    <property type="pathway name" value="PRC2 methylates histones and DNA"/>
</dbReference>
<dbReference type="Reactome" id="R-HSA-2559580">
    <property type="pathway name" value="Oxidative Stress Induced Senescence"/>
</dbReference>
<dbReference type="Reactome" id="R-HSA-3214841">
    <property type="pathway name" value="PKMTs methylate histone lysines"/>
</dbReference>
<dbReference type="Reactome" id="R-HSA-5617472">
    <property type="pathway name" value="Activation of anterior HOX genes in hindbrain development during early embryogenesis"/>
</dbReference>
<dbReference type="Reactome" id="R-HSA-8943724">
    <property type="pathway name" value="Regulation of PTEN gene transcription"/>
</dbReference>
<dbReference type="Reactome" id="R-HSA-8953750">
    <property type="pathway name" value="Transcriptional Regulation by E2F6"/>
</dbReference>
<dbReference type="Reactome" id="R-HSA-9609690">
    <property type="pathway name" value="HCMV Early Events"/>
</dbReference>
<dbReference type="Reactome" id="R-HSA-9710421">
    <property type="pathway name" value="Defective pyroptosis"/>
</dbReference>
<dbReference type="SignaLink" id="Q15910"/>
<dbReference type="SIGNOR" id="Q15910"/>
<dbReference type="BioGRID-ORCS" id="2146">
    <property type="hits" value="73 hits in 1192 CRISPR screens"/>
</dbReference>
<dbReference type="CD-CODE" id="F701F3BC">
    <property type="entry name" value="PcG body"/>
</dbReference>
<dbReference type="ChiTaRS" id="EZH2">
    <property type="organism name" value="human"/>
</dbReference>
<dbReference type="EvolutionaryTrace" id="Q15910"/>
<dbReference type="GeneWiki" id="EZH2"/>
<dbReference type="GenomeRNAi" id="2146"/>
<dbReference type="Pharos" id="Q15910">
    <property type="development level" value="Tclin"/>
</dbReference>
<dbReference type="PRO" id="PR:Q15910"/>
<dbReference type="Proteomes" id="UP000005640">
    <property type="component" value="Chromosome 7"/>
</dbReference>
<dbReference type="RNAct" id="Q15910">
    <property type="molecule type" value="protein"/>
</dbReference>
<dbReference type="Bgee" id="ENSG00000106462">
    <property type="expression patterns" value="Expressed in ganglionic eminence and 135 other cell types or tissues"/>
</dbReference>
<dbReference type="ExpressionAtlas" id="Q15910">
    <property type="expression patterns" value="baseline and differential"/>
</dbReference>
<dbReference type="GO" id="GO:0000785">
    <property type="term" value="C:chromatin"/>
    <property type="evidence" value="ECO:0000314"/>
    <property type="project" value="UniProtKB"/>
</dbReference>
<dbReference type="GO" id="GO:0005677">
    <property type="term" value="C:chromatin silencing complex"/>
    <property type="evidence" value="ECO:0007669"/>
    <property type="project" value="Ensembl"/>
</dbReference>
<dbReference type="GO" id="GO:0005694">
    <property type="term" value="C:chromosome"/>
    <property type="evidence" value="ECO:0000314"/>
    <property type="project" value="UniProt"/>
</dbReference>
<dbReference type="GO" id="GO:0000781">
    <property type="term" value="C:chromosome, telomeric region"/>
    <property type="evidence" value="ECO:0000316"/>
    <property type="project" value="ARUK-UCL"/>
</dbReference>
<dbReference type="GO" id="GO:0035098">
    <property type="term" value="C:ESC/E(Z) complex"/>
    <property type="evidence" value="ECO:0000314"/>
    <property type="project" value="UniProtKB"/>
</dbReference>
<dbReference type="GO" id="GO:0005654">
    <property type="term" value="C:nucleoplasm"/>
    <property type="evidence" value="ECO:0000314"/>
    <property type="project" value="HPA"/>
</dbReference>
<dbReference type="GO" id="GO:0005634">
    <property type="term" value="C:nucleus"/>
    <property type="evidence" value="ECO:0000314"/>
    <property type="project" value="MGI"/>
</dbReference>
<dbReference type="GO" id="GO:0005721">
    <property type="term" value="C:pericentric heterochromatin"/>
    <property type="evidence" value="ECO:0007669"/>
    <property type="project" value="Ensembl"/>
</dbReference>
<dbReference type="GO" id="GO:0045120">
    <property type="term" value="C:pronucleus"/>
    <property type="evidence" value="ECO:0007669"/>
    <property type="project" value="Ensembl"/>
</dbReference>
<dbReference type="GO" id="GO:0045202">
    <property type="term" value="C:synapse"/>
    <property type="evidence" value="ECO:0007669"/>
    <property type="project" value="GOC"/>
</dbReference>
<dbReference type="GO" id="GO:0003682">
    <property type="term" value="F:chromatin binding"/>
    <property type="evidence" value="ECO:0000314"/>
    <property type="project" value="UniProtKB"/>
</dbReference>
<dbReference type="GO" id="GO:0031490">
    <property type="term" value="F:chromatin DNA binding"/>
    <property type="evidence" value="ECO:0000314"/>
    <property type="project" value="UniProtKB"/>
</dbReference>
<dbReference type="GO" id="GO:0042393">
    <property type="term" value="F:histone binding"/>
    <property type="evidence" value="ECO:0000314"/>
    <property type="project" value="DisProt"/>
</dbReference>
<dbReference type="GO" id="GO:0140938">
    <property type="term" value="F:histone H3 methyltransferase activity"/>
    <property type="evidence" value="ECO:0000304"/>
    <property type="project" value="Reactome"/>
</dbReference>
<dbReference type="GO" id="GO:0046976">
    <property type="term" value="F:histone H3K27 methyltransferase activity"/>
    <property type="evidence" value="ECO:0000314"/>
    <property type="project" value="UniProtKB"/>
</dbReference>
<dbReference type="GO" id="GO:0140951">
    <property type="term" value="F:histone H3K27 trimethyltransferase activity"/>
    <property type="evidence" value="ECO:0007669"/>
    <property type="project" value="UniProtKB-EC"/>
</dbReference>
<dbReference type="GO" id="GO:0042054">
    <property type="term" value="F:histone methyltransferase activity"/>
    <property type="evidence" value="ECO:0000315"/>
    <property type="project" value="UniProtKB"/>
</dbReference>
<dbReference type="GO" id="GO:0106222">
    <property type="term" value="F:lncRNA binding"/>
    <property type="evidence" value="ECO:0007669"/>
    <property type="project" value="Ensembl"/>
</dbReference>
<dbReference type="GO" id="GO:0031491">
    <property type="term" value="F:nucleosome binding"/>
    <property type="evidence" value="ECO:0000314"/>
    <property type="project" value="DisProt"/>
</dbReference>
<dbReference type="GO" id="GO:0070878">
    <property type="term" value="F:primary miRNA binding"/>
    <property type="evidence" value="ECO:0007669"/>
    <property type="project" value="Ensembl"/>
</dbReference>
<dbReference type="GO" id="GO:1990841">
    <property type="term" value="F:promoter-specific chromatin binding"/>
    <property type="evidence" value="ECO:0000314"/>
    <property type="project" value="UniProtKB"/>
</dbReference>
<dbReference type="GO" id="GO:0016279">
    <property type="term" value="F:protein-lysine N-methyltransferase activity"/>
    <property type="evidence" value="ECO:0000314"/>
    <property type="project" value="UniProtKB"/>
</dbReference>
<dbReference type="GO" id="GO:0043021">
    <property type="term" value="F:ribonucleoprotein complex binding"/>
    <property type="evidence" value="ECO:0007669"/>
    <property type="project" value="Ensembl"/>
</dbReference>
<dbReference type="GO" id="GO:0003723">
    <property type="term" value="F:RNA binding"/>
    <property type="evidence" value="ECO:0000269"/>
    <property type="project" value="DisProt"/>
</dbReference>
<dbReference type="GO" id="GO:0000978">
    <property type="term" value="F:RNA polymerase II cis-regulatory region sequence-specific DNA binding"/>
    <property type="evidence" value="ECO:0007669"/>
    <property type="project" value="Ensembl"/>
</dbReference>
<dbReference type="GO" id="GO:0000979">
    <property type="term" value="F:RNA polymerase II core promoter sequence-specific DNA binding"/>
    <property type="evidence" value="ECO:0007669"/>
    <property type="project" value="Ensembl"/>
</dbReference>
<dbReference type="GO" id="GO:0003714">
    <property type="term" value="F:transcription corepressor activity"/>
    <property type="evidence" value="ECO:0000250"/>
    <property type="project" value="ARUK-UCL"/>
</dbReference>
<dbReference type="GO" id="GO:0001222">
    <property type="term" value="F:transcription corepressor binding"/>
    <property type="evidence" value="ECO:0000353"/>
    <property type="project" value="ARUK-UCL"/>
</dbReference>
<dbReference type="GO" id="GO:0030183">
    <property type="term" value="P:B cell differentiation"/>
    <property type="evidence" value="ECO:0007669"/>
    <property type="project" value="Ensembl"/>
</dbReference>
<dbReference type="GO" id="GO:0014898">
    <property type="term" value="P:cardiac muscle hypertrophy in response to stress"/>
    <property type="evidence" value="ECO:0007669"/>
    <property type="project" value="Ensembl"/>
</dbReference>
<dbReference type="GO" id="GO:0070301">
    <property type="term" value="P:cellular response to hydrogen peroxide"/>
    <property type="evidence" value="ECO:0007669"/>
    <property type="project" value="Ensembl"/>
</dbReference>
<dbReference type="GO" id="GO:0035984">
    <property type="term" value="P:cellular response to trichostatin A"/>
    <property type="evidence" value="ECO:0007669"/>
    <property type="project" value="Ensembl"/>
</dbReference>
<dbReference type="GO" id="GO:0021695">
    <property type="term" value="P:cerebellar cortex development"/>
    <property type="evidence" value="ECO:0007669"/>
    <property type="project" value="Ensembl"/>
</dbReference>
<dbReference type="GO" id="GO:0006325">
    <property type="term" value="P:chromatin organization"/>
    <property type="evidence" value="ECO:0000304"/>
    <property type="project" value="ProtInc"/>
</dbReference>
<dbReference type="GO" id="GO:0006346">
    <property type="term" value="P:DNA methylation-dependent constitutive heterochromatin formation"/>
    <property type="evidence" value="ECO:0007669"/>
    <property type="project" value="Ensembl"/>
</dbReference>
<dbReference type="GO" id="GO:0140718">
    <property type="term" value="P:facultative heterochromatin formation"/>
    <property type="evidence" value="ECO:0007669"/>
    <property type="project" value="Ensembl"/>
</dbReference>
<dbReference type="GO" id="GO:0070314">
    <property type="term" value="P:G1 to G0 transition"/>
    <property type="evidence" value="ECO:0007669"/>
    <property type="project" value="Ensembl"/>
</dbReference>
<dbReference type="GO" id="GO:0000082">
    <property type="term" value="P:G1/S transition of mitotic cell cycle"/>
    <property type="evidence" value="ECO:0007669"/>
    <property type="project" value="Ensembl"/>
</dbReference>
<dbReference type="GO" id="GO:0036333">
    <property type="term" value="P:hepatocyte homeostasis"/>
    <property type="evidence" value="ECO:0007669"/>
    <property type="project" value="Ensembl"/>
</dbReference>
<dbReference type="GO" id="GO:0031507">
    <property type="term" value="P:heterochromatin formation"/>
    <property type="evidence" value="ECO:0000318"/>
    <property type="project" value="GO_Central"/>
</dbReference>
<dbReference type="GO" id="GO:0021766">
    <property type="term" value="P:hippocampus development"/>
    <property type="evidence" value="ECO:0007669"/>
    <property type="project" value="Ensembl"/>
</dbReference>
<dbReference type="GO" id="GO:0030216">
    <property type="term" value="P:keratinocyte differentiation"/>
    <property type="evidence" value="ECO:0007669"/>
    <property type="project" value="Ensembl"/>
</dbReference>
<dbReference type="GO" id="GO:0097421">
    <property type="term" value="P:liver regeneration"/>
    <property type="evidence" value="ECO:0007669"/>
    <property type="project" value="Ensembl"/>
</dbReference>
<dbReference type="GO" id="GO:0032259">
    <property type="term" value="P:methylation"/>
    <property type="evidence" value="ECO:0007669"/>
    <property type="project" value="UniProtKB-KW"/>
</dbReference>
<dbReference type="GO" id="GO:1900016">
    <property type="term" value="P:negative regulation of cytokine production involved in inflammatory response"/>
    <property type="evidence" value="ECO:0007669"/>
    <property type="project" value="Ensembl"/>
</dbReference>
<dbReference type="GO" id="GO:0045892">
    <property type="term" value="P:negative regulation of DNA-templated transcription"/>
    <property type="evidence" value="ECO:0000315"/>
    <property type="project" value="UniProtKB"/>
</dbReference>
<dbReference type="GO" id="GO:2000134">
    <property type="term" value="P:negative regulation of G1/S transition of mitotic cell cycle"/>
    <property type="evidence" value="ECO:0007669"/>
    <property type="project" value="Ensembl"/>
</dbReference>
<dbReference type="GO" id="GO:0045814">
    <property type="term" value="P:negative regulation of gene expression, epigenetic"/>
    <property type="evidence" value="ECO:0000314"/>
    <property type="project" value="UniProtKB"/>
</dbReference>
<dbReference type="GO" id="GO:0045617">
    <property type="term" value="P:negative regulation of keratinocyte differentiation"/>
    <property type="evidence" value="ECO:0007669"/>
    <property type="project" value="Ensembl"/>
</dbReference>
<dbReference type="GO" id="GO:0048387">
    <property type="term" value="P:negative regulation of retinoic acid receptor signaling pathway"/>
    <property type="evidence" value="ECO:0000315"/>
    <property type="project" value="UniProtKB"/>
</dbReference>
<dbReference type="GO" id="GO:2000737">
    <property type="term" value="P:negative regulation of stem cell differentiation"/>
    <property type="evidence" value="ECO:0007669"/>
    <property type="project" value="Ensembl"/>
</dbReference>
<dbReference type="GO" id="GO:0051154">
    <property type="term" value="P:negative regulation of striated muscle cell differentiation"/>
    <property type="evidence" value="ECO:0007669"/>
    <property type="project" value="Ensembl"/>
</dbReference>
<dbReference type="GO" id="GO:0000122">
    <property type="term" value="P:negative regulation of transcription by RNA polymerase II"/>
    <property type="evidence" value="ECO:0000314"/>
    <property type="project" value="UniProtKB"/>
</dbReference>
<dbReference type="GO" id="GO:0034244">
    <property type="term" value="P:negative regulation of transcription elongation by RNA polymerase II"/>
    <property type="evidence" value="ECO:0007669"/>
    <property type="project" value="Ensembl"/>
</dbReference>
<dbReference type="GO" id="GO:1902808">
    <property type="term" value="P:positive regulation of cell cycle G1/S phase transition"/>
    <property type="evidence" value="ECO:0000315"/>
    <property type="project" value="BHF-UCL"/>
</dbReference>
<dbReference type="GO" id="GO:0030335">
    <property type="term" value="P:positive regulation of cell migration"/>
    <property type="evidence" value="ECO:0000314"/>
    <property type="project" value="UniProt"/>
</dbReference>
<dbReference type="GO" id="GO:0008284">
    <property type="term" value="P:positive regulation of cell population proliferation"/>
    <property type="evidence" value="ECO:0000315"/>
    <property type="project" value="BHF-UCL"/>
</dbReference>
<dbReference type="GO" id="GO:1900006">
    <property type="term" value="P:positive regulation of dendrite development"/>
    <property type="evidence" value="ECO:0007669"/>
    <property type="project" value="Ensembl"/>
</dbReference>
<dbReference type="GO" id="GO:0010718">
    <property type="term" value="P:positive regulation of epithelial to mesenchymal transition"/>
    <property type="evidence" value="ECO:0000314"/>
    <property type="project" value="UniProtKB"/>
</dbReference>
<dbReference type="GO" id="GO:0043547">
    <property type="term" value="P:positive regulation of GTPase activity"/>
    <property type="evidence" value="ECO:0000314"/>
    <property type="project" value="UniProtKB"/>
</dbReference>
<dbReference type="GO" id="GO:0043406">
    <property type="term" value="P:positive regulation of MAP kinase activity"/>
    <property type="evidence" value="ECO:0000314"/>
    <property type="project" value="UniProtKB"/>
</dbReference>
<dbReference type="GO" id="GO:0071902">
    <property type="term" value="P:positive regulation of protein serine/threonine kinase activity"/>
    <property type="evidence" value="ECO:0000314"/>
    <property type="project" value="UniProtKB"/>
</dbReference>
<dbReference type="GO" id="GO:0071168">
    <property type="term" value="P:protein localization to chromatin"/>
    <property type="evidence" value="ECO:0007669"/>
    <property type="project" value="Ensembl"/>
</dbReference>
<dbReference type="GO" id="GO:0036211">
    <property type="term" value="P:protein modification process"/>
    <property type="evidence" value="ECO:0007669"/>
    <property type="project" value="Ensembl"/>
</dbReference>
<dbReference type="GO" id="GO:0042752">
    <property type="term" value="P:regulation of circadian rhythm"/>
    <property type="evidence" value="ECO:0000315"/>
    <property type="project" value="UniProtKB"/>
</dbReference>
<dbReference type="GO" id="GO:0006355">
    <property type="term" value="P:regulation of DNA-templated transcription"/>
    <property type="evidence" value="ECO:0000304"/>
    <property type="project" value="ProtInc"/>
</dbReference>
<dbReference type="GO" id="GO:0014013">
    <property type="term" value="P:regulation of gliogenesis"/>
    <property type="evidence" value="ECO:0007669"/>
    <property type="project" value="Ensembl"/>
</dbReference>
<dbReference type="GO" id="GO:0090183">
    <property type="term" value="P:regulation of kidney development"/>
    <property type="evidence" value="ECO:0007669"/>
    <property type="project" value="Ensembl"/>
</dbReference>
<dbReference type="GO" id="GO:0031048">
    <property type="term" value="P:regulatory ncRNA-mediated heterochromatin formation"/>
    <property type="evidence" value="ECO:0000316"/>
    <property type="project" value="FlyBase"/>
</dbReference>
<dbReference type="GO" id="GO:0032355">
    <property type="term" value="P:response to estradiol"/>
    <property type="evidence" value="ECO:0007669"/>
    <property type="project" value="Ensembl"/>
</dbReference>
<dbReference type="GO" id="GO:1904772">
    <property type="term" value="P:response to tetrachloromethane"/>
    <property type="evidence" value="ECO:0007669"/>
    <property type="project" value="Ensembl"/>
</dbReference>
<dbReference type="GO" id="GO:0048511">
    <property type="term" value="P:rhythmic process"/>
    <property type="evidence" value="ECO:0007669"/>
    <property type="project" value="UniProtKB-KW"/>
</dbReference>
<dbReference type="GO" id="GO:0014834">
    <property type="term" value="P:skeletal muscle satellite cell maintenance involved in skeletal muscle regeneration"/>
    <property type="evidence" value="ECO:0007669"/>
    <property type="project" value="Ensembl"/>
</dbReference>
<dbReference type="GO" id="GO:0048863">
    <property type="term" value="P:stem cell differentiation"/>
    <property type="evidence" value="ECO:0007669"/>
    <property type="project" value="Ensembl"/>
</dbReference>
<dbReference type="GO" id="GO:0031509">
    <property type="term" value="P:subtelomeric heterochromatin formation"/>
    <property type="evidence" value="ECO:0000316"/>
    <property type="project" value="ARUK-UCL"/>
</dbReference>
<dbReference type="GO" id="GO:0051932">
    <property type="term" value="P:synaptic transmission, GABAergic"/>
    <property type="evidence" value="ECO:0007669"/>
    <property type="project" value="Ensembl"/>
</dbReference>
<dbReference type="CDD" id="cd00167">
    <property type="entry name" value="SANT"/>
    <property type="match status" value="1"/>
</dbReference>
<dbReference type="CDD" id="cd19218">
    <property type="entry name" value="SET_EZH2"/>
    <property type="match status" value="1"/>
</dbReference>
<dbReference type="DisProt" id="DP01817"/>
<dbReference type="FunFam" id="2.170.270.10:FF:000001">
    <property type="entry name" value="Putative histone-lysine N-methyltransferase EZH2"/>
    <property type="match status" value="1"/>
</dbReference>
<dbReference type="Gene3D" id="1.20.58.1880">
    <property type="match status" value="1"/>
</dbReference>
<dbReference type="Gene3D" id="2.170.270.10">
    <property type="entry name" value="SET domain"/>
    <property type="match status" value="1"/>
</dbReference>
<dbReference type="IDEAL" id="IID00727"/>
<dbReference type="InterPro" id="IPR026489">
    <property type="entry name" value="CXC_dom"/>
</dbReference>
<dbReference type="InterPro" id="IPR045318">
    <property type="entry name" value="EZH1/2-like"/>
</dbReference>
<dbReference type="InterPro" id="IPR048358">
    <property type="entry name" value="EZH1/2_MCSS"/>
</dbReference>
<dbReference type="InterPro" id="IPR021654">
    <property type="entry name" value="EZH1/EZH2"/>
</dbReference>
<dbReference type="InterPro" id="IPR044439">
    <property type="entry name" value="EZH2_SET"/>
</dbReference>
<dbReference type="InterPro" id="IPR041343">
    <property type="entry name" value="PRC2_HTH_1"/>
</dbReference>
<dbReference type="InterPro" id="IPR041355">
    <property type="entry name" value="Pre-SET_CXC"/>
</dbReference>
<dbReference type="InterPro" id="IPR001005">
    <property type="entry name" value="SANT/Myb"/>
</dbReference>
<dbReference type="InterPro" id="IPR001214">
    <property type="entry name" value="SET_dom"/>
</dbReference>
<dbReference type="InterPro" id="IPR046341">
    <property type="entry name" value="SET_dom_sf"/>
</dbReference>
<dbReference type="InterPro" id="IPR033467">
    <property type="entry name" value="Tesmin/TSO1-like_CXC"/>
</dbReference>
<dbReference type="PANTHER" id="PTHR45747">
    <property type="entry name" value="HISTONE-LYSINE N-METHYLTRANSFERASE E(Z)"/>
    <property type="match status" value="1"/>
</dbReference>
<dbReference type="PANTHER" id="PTHR45747:SF3">
    <property type="entry name" value="HISTONE-LYSINE N-METHYLTRANSFERASE EZH2"/>
    <property type="match status" value="1"/>
</dbReference>
<dbReference type="Pfam" id="PF21358">
    <property type="entry name" value="Ezh2_MCSS"/>
    <property type="match status" value="1"/>
</dbReference>
<dbReference type="Pfam" id="PF11616">
    <property type="entry name" value="EZH2_WD-Binding"/>
    <property type="match status" value="1"/>
</dbReference>
<dbReference type="Pfam" id="PF18118">
    <property type="entry name" value="PRC2_HTH_1"/>
    <property type="match status" value="1"/>
</dbReference>
<dbReference type="Pfam" id="PF18264">
    <property type="entry name" value="preSET_CXC"/>
    <property type="match status" value="1"/>
</dbReference>
<dbReference type="Pfam" id="PF00856">
    <property type="entry name" value="SET"/>
    <property type="match status" value="1"/>
</dbReference>
<dbReference type="SMART" id="SM01114">
    <property type="entry name" value="CXC"/>
    <property type="match status" value="1"/>
</dbReference>
<dbReference type="SMART" id="SM00717">
    <property type="entry name" value="SANT"/>
    <property type="match status" value="2"/>
</dbReference>
<dbReference type="SMART" id="SM00317">
    <property type="entry name" value="SET"/>
    <property type="match status" value="1"/>
</dbReference>
<dbReference type="SUPFAM" id="SSF82199">
    <property type="entry name" value="SET domain"/>
    <property type="match status" value="1"/>
</dbReference>
<dbReference type="PROSITE" id="PS51633">
    <property type="entry name" value="CXC"/>
    <property type="match status" value="1"/>
</dbReference>
<dbReference type="PROSITE" id="PS50280">
    <property type="entry name" value="SET"/>
    <property type="match status" value="1"/>
</dbReference>
<evidence type="ECO:0000250" key="1"/>
<evidence type="ECO:0000250" key="2">
    <source>
        <dbReference type="UniProtKB" id="Q61188"/>
    </source>
</evidence>
<evidence type="ECO:0000255" key="3">
    <source>
        <dbReference type="PROSITE-ProRule" id="PRU00190"/>
    </source>
</evidence>
<evidence type="ECO:0000255" key="4">
    <source>
        <dbReference type="PROSITE-ProRule" id="PRU00970"/>
    </source>
</evidence>
<evidence type="ECO:0000256" key="5">
    <source>
        <dbReference type="SAM" id="MobiDB-lite"/>
    </source>
</evidence>
<evidence type="ECO:0000269" key="6">
    <source>
    </source>
</evidence>
<evidence type="ECO:0000269" key="7">
    <source>
    </source>
</evidence>
<evidence type="ECO:0000269" key="8">
    <source>
    </source>
</evidence>
<evidence type="ECO:0000269" key="9">
    <source>
    </source>
</evidence>
<evidence type="ECO:0000269" key="10">
    <source>
    </source>
</evidence>
<evidence type="ECO:0000269" key="11">
    <source>
    </source>
</evidence>
<evidence type="ECO:0000269" key="12">
    <source>
    </source>
</evidence>
<evidence type="ECO:0000269" key="13">
    <source>
    </source>
</evidence>
<evidence type="ECO:0000269" key="14">
    <source>
    </source>
</evidence>
<evidence type="ECO:0000269" key="15">
    <source>
    </source>
</evidence>
<evidence type="ECO:0000269" key="16">
    <source>
    </source>
</evidence>
<evidence type="ECO:0000269" key="17">
    <source>
    </source>
</evidence>
<evidence type="ECO:0000269" key="18">
    <source>
    </source>
</evidence>
<evidence type="ECO:0000269" key="19">
    <source>
    </source>
</evidence>
<evidence type="ECO:0000269" key="20">
    <source>
    </source>
</evidence>
<evidence type="ECO:0000269" key="21">
    <source>
    </source>
</evidence>
<evidence type="ECO:0000269" key="22">
    <source>
    </source>
</evidence>
<evidence type="ECO:0000269" key="23">
    <source>
    </source>
</evidence>
<evidence type="ECO:0000269" key="24">
    <source>
    </source>
</evidence>
<evidence type="ECO:0000269" key="25">
    <source>
    </source>
</evidence>
<evidence type="ECO:0000269" key="26">
    <source>
    </source>
</evidence>
<evidence type="ECO:0000269" key="27">
    <source>
    </source>
</evidence>
<evidence type="ECO:0000269" key="28">
    <source>
    </source>
</evidence>
<evidence type="ECO:0000269" key="29">
    <source>
    </source>
</evidence>
<evidence type="ECO:0000269" key="30">
    <source>
    </source>
</evidence>
<evidence type="ECO:0000269" key="31">
    <source>
    </source>
</evidence>
<evidence type="ECO:0000269" key="32">
    <source>
    </source>
</evidence>
<evidence type="ECO:0000269" key="33">
    <source>
    </source>
</evidence>
<evidence type="ECO:0000269" key="34">
    <source>
    </source>
</evidence>
<evidence type="ECO:0000269" key="35">
    <source>
    </source>
</evidence>
<evidence type="ECO:0000269" key="36">
    <source>
    </source>
</evidence>
<evidence type="ECO:0000269" key="37">
    <source>
    </source>
</evidence>
<evidence type="ECO:0000269" key="38">
    <source>
    </source>
</evidence>
<evidence type="ECO:0000269" key="39">
    <source>
    </source>
</evidence>
<evidence type="ECO:0000269" key="40">
    <source>
    </source>
</evidence>
<evidence type="ECO:0000269" key="41">
    <source>
    </source>
</evidence>
<evidence type="ECO:0000269" key="42">
    <source>
    </source>
</evidence>
<evidence type="ECO:0000269" key="43">
    <source>
    </source>
</evidence>
<evidence type="ECO:0000269" key="44">
    <source>
    </source>
</evidence>
<evidence type="ECO:0000269" key="45">
    <source>
    </source>
</evidence>
<evidence type="ECO:0000269" key="46">
    <source>
    </source>
</evidence>
<evidence type="ECO:0000269" key="47">
    <source>
    </source>
</evidence>
<evidence type="ECO:0000269" key="48">
    <source>
    </source>
</evidence>
<evidence type="ECO:0000269" key="49">
    <source>
    </source>
</evidence>
<evidence type="ECO:0000303" key="50">
    <source>
    </source>
</evidence>
<evidence type="ECO:0000303" key="51">
    <source>
    </source>
</evidence>
<evidence type="ECO:0000303" key="52">
    <source>
    </source>
</evidence>
<evidence type="ECO:0000305" key="53"/>
<evidence type="ECO:0000305" key="54">
    <source>
    </source>
</evidence>
<evidence type="ECO:0000305" key="55">
    <source>
    </source>
</evidence>
<evidence type="ECO:0000305" key="56">
    <source>
    </source>
</evidence>
<evidence type="ECO:0000312" key="57">
    <source>
        <dbReference type="HGNC" id="HGNC:3527"/>
    </source>
</evidence>
<evidence type="ECO:0007744" key="58">
    <source>
    </source>
</evidence>
<evidence type="ECO:0007744" key="59">
    <source>
    </source>
</evidence>
<evidence type="ECO:0007744" key="60">
    <source>
    </source>
</evidence>
<evidence type="ECO:0007744" key="61">
    <source>
    </source>
</evidence>
<evidence type="ECO:0007744" key="62">
    <source>
    </source>
</evidence>
<evidence type="ECO:0007744" key="63">
    <source>
    </source>
</evidence>
<evidence type="ECO:0007744" key="64">
    <source>
    </source>
</evidence>
<evidence type="ECO:0007744" key="65">
    <source>
    </source>
</evidence>
<evidence type="ECO:0007744" key="66">
    <source>
    </source>
</evidence>
<evidence type="ECO:0007744" key="67">
    <source>
    </source>
</evidence>
<evidence type="ECO:0007829" key="68">
    <source>
        <dbReference type="PDB" id="4MI0"/>
    </source>
</evidence>
<evidence type="ECO:0007829" key="69">
    <source>
        <dbReference type="PDB" id="5HYN"/>
    </source>
</evidence>
<evidence type="ECO:0007829" key="70">
    <source>
        <dbReference type="PDB" id="5IJ8"/>
    </source>
</evidence>
<evidence type="ECO:0007829" key="71">
    <source>
        <dbReference type="PDB" id="5LS6"/>
    </source>
</evidence>
<evidence type="ECO:0007829" key="72">
    <source>
        <dbReference type="PDB" id="5U5T"/>
    </source>
</evidence>
<evidence type="ECO:0007829" key="73">
    <source>
        <dbReference type="PDB" id="6C24"/>
    </source>
</evidence>
<evidence type="ECO:0007829" key="74">
    <source>
        <dbReference type="PDB" id="6U4Y"/>
    </source>
</evidence>
<evidence type="ECO:0007829" key="75">
    <source>
        <dbReference type="PDB" id="6WKR"/>
    </source>
</evidence>
<evidence type="ECO:0007829" key="76">
    <source>
        <dbReference type="PDB" id="9C8U"/>
    </source>
</evidence>
<gene>
    <name evidence="57" type="primary">EZH2</name>
    <name type="synonym">KMT6</name>
</gene>
<protein>
    <recommendedName>
        <fullName evidence="53">Histone-lysine N-methyltransferase EZH2</fullName>
        <ecNumber evidence="35">2.1.1.356</ecNumber>
    </recommendedName>
    <alternativeName>
        <fullName>ENX-1</fullName>
    </alternativeName>
    <alternativeName>
        <fullName evidence="52">Enhancer of zeste homolog 2</fullName>
    </alternativeName>
    <alternativeName>
        <fullName>Lysine N-methyltransferase 6</fullName>
    </alternativeName>
</protein>
<sequence length="746" mass="85363">MGQTGKKSEKGPVCWRKRVKSEYMRLRQLKRFRRADEVKSMFSSNRQKILERTEILNQEWKQRRIQPVHILTSVSSLRGTRECSVTSDLDFPTQVIPLKTLNAVASVPIMYSWSPLQQNFMVEDETVLHNIPYMGDEVLDQDGTFIEELIKNYDGKVHGDRECGFINDEIFVELVNALGQYNDDDDDDDGDDPEEREEKQKDLEDHRDDKESRPPRKFPSDKIFEAISSMFPDKGTAEELKEKYKELTEQQLPGALPPECTPNIDGPNAKSVQREQSLHSFHTLFCRRCFKYDCFLHPFHATPNTYKRKNTETALDNKPCGPQCYQHLEGAKEFAAALTAERIKTPPKRPGGRRRGRLPNNSSRPSTPTINVLESKDTDSDREAGTETGGENNDKEEEEKKDETSSSSEANSRCQTPIKMKPNIEPPENVEWSGAEASMFRVLIGTYYDNFCAIARLIGTKTCRQVYEFRVKESSIIAPAPAEDVDTPPRKKKRKHRLWAAHCRKIQLKKDGSSNHVYNYQPCDHPRQPCDSSCPCVIAQNFCEKFCQCSSECQNRFPGCRCKAQCNTKQCPCYLAVRECDPDLCLTCGAADHWDSKNVSCKNCSIQRGSKKHLLLAPSDVAGWGIFIKDPVQKNEFISEYCGEIISQDEADRRGKVYDKYMCSFLFNLNNDFVVDATRKGNKIRFANHSVNPNCYAKVMMVNGDHRIGIFAKRAIQTGEELFFDYRYSQADALKYVGIEREMEIP</sequence>